<accession>O76064</accession>
<accession>A6NN24</accession>
<accession>A8MYC0</accession>
<accession>B4DPG0</accession>
<accession>Q53H16</accession>
<accession>Q5NKW5</accession>
<reference key="1">
    <citation type="journal article" date="1998" name="J. Hum. Genet.">
        <title>Isolation, tissue expression, and chromosomal assignment of a novel human gene which encodes a protein with RING finger motif.</title>
        <authorList>
            <person name="Seki N."/>
            <person name="Hattori A."/>
            <person name="Sugano S."/>
            <person name="Suzuki Y."/>
            <person name="Nakagawara A."/>
            <person name="Ohhira M."/>
            <person name="Muramatsu M."/>
            <person name="Hori T."/>
            <person name="Saito T."/>
        </authorList>
    </citation>
    <scope>NUCLEOTIDE SEQUENCE [GENOMIC DNA / MRNA] (ISOFORM 1)</scope>
    <scope>TISSUE SPECIFICITY</scope>
    <source>
        <tissue>Brain</tissue>
    </source>
</reference>
<reference key="2">
    <citation type="journal article" date="2006" name="J. Cell. Biochem.">
        <title>The RING finger protein RNF8 recruits UBC13 for lysine 63-based self polyubiquitylation.</title>
        <authorList>
            <person name="Plans V."/>
            <person name="Scheper J."/>
            <person name="Soler M."/>
            <person name="Loukili N."/>
            <person name="Okano Y."/>
            <person name="Thomson T.M."/>
        </authorList>
    </citation>
    <scope>NUCLEOTIDE SEQUENCE [MRNA] (ISOFORM 1)</scope>
    <scope>SUBCELLULAR LOCATION</scope>
    <scope>TISSUE SPECIFICITY</scope>
    <scope>INTERACTION WITH UBE2E2 AND UBE2N</scope>
    <scope>AUTOUBIQUITINATION</scope>
    <scope>MUTAGENESIS OF CYS-403</scope>
    <source>
        <tissue>Fetal brain</tissue>
    </source>
</reference>
<reference key="3">
    <citation type="journal article" date="1998" name="DNA Res.">
        <title>Prediction of the coding sequences of unidentified human genes. X. The complete sequences of 100 new cDNA clones from brain which can code for large proteins in vitro.</title>
        <authorList>
            <person name="Ishikawa K."/>
            <person name="Nagase T."/>
            <person name="Suyama M."/>
            <person name="Miyajima N."/>
            <person name="Tanaka A."/>
            <person name="Kotani H."/>
            <person name="Nomura N."/>
            <person name="Ohara O."/>
        </authorList>
    </citation>
    <scope>NUCLEOTIDE SEQUENCE [LARGE SCALE MRNA] (ISOFORM 1)</scope>
    <source>
        <tissue>Brain</tissue>
    </source>
</reference>
<reference key="4">
    <citation type="journal article" date="2004" name="Nat. Genet.">
        <title>Complete sequencing and characterization of 21,243 full-length human cDNAs.</title>
        <authorList>
            <person name="Ota T."/>
            <person name="Suzuki Y."/>
            <person name="Nishikawa T."/>
            <person name="Otsuki T."/>
            <person name="Sugiyama T."/>
            <person name="Irie R."/>
            <person name="Wakamatsu A."/>
            <person name="Hayashi K."/>
            <person name="Sato H."/>
            <person name="Nagai K."/>
            <person name="Kimura K."/>
            <person name="Makita H."/>
            <person name="Sekine M."/>
            <person name="Obayashi M."/>
            <person name="Nishi T."/>
            <person name="Shibahara T."/>
            <person name="Tanaka T."/>
            <person name="Ishii S."/>
            <person name="Yamamoto J."/>
            <person name="Saito K."/>
            <person name="Kawai Y."/>
            <person name="Isono Y."/>
            <person name="Nakamura Y."/>
            <person name="Nagahari K."/>
            <person name="Murakami K."/>
            <person name="Yasuda T."/>
            <person name="Iwayanagi T."/>
            <person name="Wagatsuma M."/>
            <person name="Shiratori A."/>
            <person name="Sudo H."/>
            <person name="Hosoiri T."/>
            <person name="Kaku Y."/>
            <person name="Kodaira H."/>
            <person name="Kondo H."/>
            <person name="Sugawara M."/>
            <person name="Takahashi M."/>
            <person name="Kanda K."/>
            <person name="Yokoi T."/>
            <person name="Furuya T."/>
            <person name="Kikkawa E."/>
            <person name="Omura Y."/>
            <person name="Abe K."/>
            <person name="Kamihara K."/>
            <person name="Katsuta N."/>
            <person name="Sato K."/>
            <person name="Tanikawa M."/>
            <person name="Yamazaki M."/>
            <person name="Ninomiya K."/>
            <person name="Ishibashi T."/>
            <person name="Yamashita H."/>
            <person name="Murakawa K."/>
            <person name="Fujimori K."/>
            <person name="Tanai H."/>
            <person name="Kimata M."/>
            <person name="Watanabe M."/>
            <person name="Hiraoka S."/>
            <person name="Chiba Y."/>
            <person name="Ishida S."/>
            <person name="Ono Y."/>
            <person name="Takiguchi S."/>
            <person name="Watanabe S."/>
            <person name="Yosida M."/>
            <person name="Hotuta T."/>
            <person name="Kusano J."/>
            <person name="Kanehori K."/>
            <person name="Takahashi-Fujii A."/>
            <person name="Hara H."/>
            <person name="Tanase T.-O."/>
            <person name="Nomura Y."/>
            <person name="Togiya S."/>
            <person name="Komai F."/>
            <person name="Hara R."/>
            <person name="Takeuchi K."/>
            <person name="Arita M."/>
            <person name="Imose N."/>
            <person name="Musashino K."/>
            <person name="Yuuki H."/>
            <person name="Oshima A."/>
            <person name="Sasaki N."/>
            <person name="Aotsuka S."/>
            <person name="Yoshikawa Y."/>
            <person name="Matsunawa H."/>
            <person name="Ichihara T."/>
            <person name="Shiohata N."/>
            <person name="Sano S."/>
            <person name="Moriya S."/>
            <person name="Momiyama H."/>
            <person name="Satoh N."/>
            <person name="Takami S."/>
            <person name="Terashima Y."/>
            <person name="Suzuki O."/>
            <person name="Nakagawa S."/>
            <person name="Senoh A."/>
            <person name="Mizoguchi H."/>
            <person name="Goto Y."/>
            <person name="Shimizu F."/>
            <person name="Wakebe H."/>
            <person name="Hishigaki H."/>
            <person name="Watanabe T."/>
            <person name="Sugiyama A."/>
            <person name="Takemoto M."/>
            <person name="Kawakami B."/>
            <person name="Yamazaki M."/>
            <person name="Watanabe K."/>
            <person name="Kumagai A."/>
            <person name="Itakura S."/>
            <person name="Fukuzumi Y."/>
            <person name="Fujimori Y."/>
            <person name="Komiyama M."/>
            <person name="Tashiro H."/>
            <person name="Tanigami A."/>
            <person name="Fujiwara T."/>
            <person name="Ono T."/>
            <person name="Yamada K."/>
            <person name="Fujii Y."/>
            <person name="Ozaki K."/>
            <person name="Hirao M."/>
            <person name="Ohmori Y."/>
            <person name="Kawabata A."/>
            <person name="Hikiji T."/>
            <person name="Kobatake N."/>
            <person name="Inagaki H."/>
            <person name="Ikema Y."/>
            <person name="Okamoto S."/>
            <person name="Okitani R."/>
            <person name="Kawakami T."/>
            <person name="Noguchi S."/>
            <person name="Itoh T."/>
            <person name="Shigeta K."/>
            <person name="Senba T."/>
            <person name="Matsumura K."/>
            <person name="Nakajima Y."/>
            <person name="Mizuno T."/>
            <person name="Morinaga M."/>
            <person name="Sasaki M."/>
            <person name="Togashi T."/>
            <person name="Oyama M."/>
            <person name="Hata H."/>
            <person name="Watanabe M."/>
            <person name="Komatsu T."/>
            <person name="Mizushima-Sugano J."/>
            <person name="Satoh T."/>
            <person name="Shirai Y."/>
            <person name="Takahashi Y."/>
            <person name="Nakagawa K."/>
            <person name="Okumura K."/>
            <person name="Nagase T."/>
            <person name="Nomura N."/>
            <person name="Kikuchi H."/>
            <person name="Masuho Y."/>
            <person name="Yamashita R."/>
            <person name="Nakai K."/>
            <person name="Yada T."/>
            <person name="Nakamura Y."/>
            <person name="Ohara O."/>
            <person name="Isogai T."/>
            <person name="Sugano S."/>
        </authorList>
    </citation>
    <scope>NUCLEOTIDE SEQUENCE [LARGE SCALE MRNA] (ISOFORM 2)</scope>
    <source>
        <tissue>Kidney</tissue>
    </source>
</reference>
<reference key="5">
    <citation type="submission" date="2003-05" db="EMBL/GenBank/DDBJ databases">
        <title>Cloning of human full-length CDSs in BD Creator(TM) system donor vector.</title>
        <authorList>
            <person name="Kalnine N."/>
            <person name="Chen X."/>
            <person name="Rolfs A."/>
            <person name="Halleck A."/>
            <person name="Hines L."/>
            <person name="Eisenstein S."/>
            <person name="Koundinya M."/>
            <person name="Raphael J."/>
            <person name="Moreira D."/>
            <person name="Kelley T."/>
            <person name="LaBaer J."/>
            <person name="Lin Y."/>
            <person name="Phelan M."/>
            <person name="Farmer A."/>
        </authorList>
    </citation>
    <scope>NUCLEOTIDE SEQUENCE [LARGE SCALE MRNA] (ISOFORM 1)</scope>
</reference>
<reference key="6">
    <citation type="submission" date="2005-04" db="EMBL/GenBank/DDBJ databases">
        <authorList>
            <person name="Suzuki Y."/>
            <person name="Sugano S."/>
            <person name="Totoki Y."/>
            <person name="Toyoda A."/>
            <person name="Takeda T."/>
            <person name="Sakaki Y."/>
            <person name="Tanaka A."/>
            <person name="Yokoyama S."/>
        </authorList>
    </citation>
    <scope>NUCLEOTIDE SEQUENCE [LARGE SCALE MRNA] (ISOFORM 1)</scope>
    <source>
        <tissue>Hepatoma</tissue>
    </source>
</reference>
<reference key="7">
    <citation type="journal article" date="2003" name="Nature">
        <title>The DNA sequence and analysis of human chromosome 6.</title>
        <authorList>
            <person name="Mungall A.J."/>
            <person name="Palmer S.A."/>
            <person name="Sims S.K."/>
            <person name="Edwards C.A."/>
            <person name="Ashurst J.L."/>
            <person name="Wilming L."/>
            <person name="Jones M.C."/>
            <person name="Horton R."/>
            <person name="Hunt S.E."/>
            <person name="Scott C.E."/>
            <person name="Gilbert J.G.R."/>
            <person name="Clamp M.E."/>
            <person name="Bethel G."/>
            <person name="Milne S."/>
            <person name="Ainscough R."/>
            <person name="Almeida J.P."/>
            <person name="Ambrose K.D."/>
            <person name="Andrews T.D."/>
            <person name="Ashwell R.I.S."/>
            <person name="Babbage A.K."/>
            <person name="Bagguley C.L."/>
            <person name="Bailey J."/>
            <person name="Banerjee R."/>
            <person name="Barker D.J."/>
            <person name="Barlow K.F."/>
            <person name="Bates K."/>
            <person name="Beare D.M."/>
            <person name="Beasley H."/>
            <person name="Beasley O."/>
            <person name="Bird C.P."/>
            <person name="Blakey S.E."/>
            <person name="Bray-Allen S."/>
            <person name="Brook J."/>
            <person name="Brown A.J."/>
            <person name="Brown J.Y."/>
            <person name="Burford D.C."/>
            <person name="Burrill W."/>
            <person name="Burton J."/>
            <person name="Carder C."/>
            <person name="Carter N.P."/>
            <person name="Chapman J.C."/>
            <person name="Clark S.Y."/>
            <person name="Clark G."/>
            <person name="Clee C.M."/>
            <person name="Clegg S."/>
            <person name="Cobley V."/>
            <person name="Collier R.E."/>
            <person name="Collins J.E."/>
            <person name="Colman L.K."/>
            <person name="Corby N.R."/>
            <person name="Coville G.J."/>
            <person name="Culley K.M."/>
            <person name="Dhami P."/>
            <person name="Davies J."/>
            <person name="Dunn M."/>
            <person name="Earthrowl M.E."/>
            <person name="Ellington A.E."/>
            <person name="Evans K.A."/>
            <person name="Faulkner L."/>
            <person name="Francis M.D."/>
            <person name="Frankish A."/>
            <person name="Frankland J."/>
            <person name="French L."/>
            <person name="Garner P."/>
            <person name="Garnett J."/>
            <person name="Ghori M.J."/>
            <person name="Gilby L.M."/>
            <person name="Gillson C.J."/>
            <person name="Glithero R.J."/>
            <person name="Grafham D.V."/>
            <person name="Grant M."/>
            <person name="Gribble S."/>
            <person name="Griffiths C."/>
            <person name="Griffiths M.N.D."/>
            <person name="Hall R."/>
            <person name="Halls K.S."/>
            <person name="Hammond S."/>
            <person name="Harley J.L."/>
            <person name="Hart E.A."/>
            <person name="Heath P.D."/>
            <person name="Heathcott R."/>
            <person name="Holmes S.J."/>
            <person name="Howden P.J."/>
            <person name="Howe K.L."/>
            <person name="Howell G.R."/>
            <person name="Huckle E."/>
            <person name="Humphray S.J."/>
            <person name="Humphries M.D."/>
            <person name="Hunt A.R."/>
            <person name="Johnson C.M."/>
            <person name="Joy A.A."/>
            <person name="Kay M."/>
            <person name="Keenan S.J."/>
            <person name="Kimberley A.M."/>
            <person name="King A."/>
            <person name="Laird G.K."/>
            <person name="Langford C."/>
            <person name="Lawlor S."/>
            <person name="Leongamornlert D.A."/>
            <person name="Leversha M."/>
            <person name="Lloyd C.R."/>
            <person name="Lloyd D.M."/>
            <person name="Loveland J.E."/>
            <person name="Lovell J."/>
            <person name="Martin S."/>
            <person name="Mashreghi-Mohammadi M."/>
            <person name="Maslen G.L."/>
            <person name="Matthews L."/>
            <person name="McCann O.T."/>
            <person name="McLaren S.J."/>
            <person name="McLay K."/>
            <person name="McMurray A."/>
            <person name="Moore M.J.F."/>
            <person name="Mullikin J.C."/>
            <person name="Niblett D."/>
            <person name="Nickerson T."/>
            <person name="Novik K.L."/>
            <person name="Oliver K."/>
            <person name="Overton-Larty E.K."/>
            <person name="Parker A."/>
            <person name="Patel R."/>
            <person name="Pearce A.V."/>
            <person name="Peck A.I."/>
            <person name="Phillimore B.J.C.T."/>
            <person name="Phillips S."/>
            <person name="Plumb R.W."/>
            <person name="Porter K.M."/>
            <person name="Ramsey Y."/>
            <person name="Ranby S.A."/>
            <person name="Rice C.M."/>
            <person name="Ross M.T."/>
            <person name="Searle S.M."/>
            <person name="Sehra H.K."/>
            <person name="Sheridan E."/>
            <person name="Skuce C.D."/>
            <person name="Smith S."/>
            <person name="Smith M."/>
            <person name="Spraggon L."/>
            <person name="Squares S.L."/>
            <person name="Steward C.A."/>
            <person name="Sycamore N."/>
            <person name="Tamlyn-Hall G."/>
            <person name="Tester J."/>
            <person name="Theaker A.J."/>
            <person name="Thomas D.W."/>
            <person name="Thorpe A."/>
            <person name="Tracey A."/>
            <person name="Tromans A."/>
            <person name="Tubby B."/>
            <person name="Wall M."/>
            <person name="Wallis J.M."/>
            <person name="West A.P."/>
            <person name="White S.S."/>
            <person name="Whitehead S.L."/>
            <person name="Whittaker H."/>
            <person name="Wild A."/>
            <person name="Willey D.J."/>
            <person name="Wilmer T.E."/>
            <person name="Wood J.M."/>
            <person name="Wray P.W."/>
            <person name="Wyatt J.C."/>
            <person name="Young L."/>
            <person name="Younger R.M."/>
            <person name="Bentley D.R."/>
            <person name="Coulson A."/>
            <person name="Durbin R.M."/>
            <person name="Hubbard T."/>
            <person name="Sulston J.E."/>
            <person name="Dunham I."/>
            <person name="Rogers J."/>
            <person name="Beck S."/>
        </authorList>
    </citation>
    <scope>NUCLEOTIDE SEQUENCE [LARGE SCALE GENOMIC DNA]</scope>
</reference>
<reference key="8">
    <citation type="submission" date="2005-07" db="EMBL/GenBank/DDBJ databases">
        <authorList>
            <person name="Mural R.J."/>
            <person name="Istrail S."/>
            <person name="Sutton G.G."/>
            <person name="Florea L."/>
            <person name="Halpern A.L."/>
            <person name="Mobarry C.M."/>
            <person name="Lippert R."/>
            <person name="Walenz B."/>
            <person name="Shatkay H."/>
            <person name="Dew I."/>
            <person name="Miller J.R."/>
            <person name="Flanigan M.J."/>
            <person name="Edwards N.J."/>
            <person name="Bolanos R."/>
            <person name="Fasulo D."/>
            <person name="Halldorsson B.V."/>
            <person name="Hannenhalli S."/>
            <person name="Turner R."/>
            <person name="Yooseph S."/>
            <person name="Lu F."/>
            <person name="Nusskern D.R."/>
            <person name="Shue B.C."/>
            <person name="Zheng X.H."/>
            <person name="Zhong F."/>
            <person name="Delcher A.L."/>
            <person name="Huson D.H."/>
            <person name="Kravitz S.A."/>
            <person name="Mouchard L."/>
            <person name="Reinert K."/>
            <person name="Remington K.A."/>
            <person name="Clark A.G."/>
            <person name="Waterman M.S."/>
            <person name="Eichler E.E."/>
            <person name="Adams M.D."/>
            <person name="Hunkapiller M.W."/>
            <person name="Myers E.W."/>
            <person name="Venter J.C."/>
        </authorList>
    </citation>
    <scope>NUCLEOTIDE SEQUENCE [LARGE SCALE GENOMIC DNA]</scope>
</reference>
<reference key="9">
    <citation type="journal article" date="2004" name="Genome Res.">
        <title>The status, quality, and expansion of the NIH full-length cDNA project: the Mammalian Gene Collection (MGC).</title>
        <authorList>
            <consortium name="The MGC Project Team"/>
        </authorList>
    </citation>
    <scope>NUCLEOTIDE SEQUENCE [LARGE SCALE MRNA] (ISOFORM 1)</scope>
    <source>
        <tissue>Muscle</tissue>
    </source>
</reference>
<reference key="10">
    <citation type="journal article" date="2013" name="J. Biol. Chem.">
        <title>Identification of RNF8 as a ubiquitin ligase involved in targeting the p12 subunit of DNA polymerase delta for degradation in response to DNA damage.</title>
        <authorList>
            <person name="Zhang S."/>
            <person name="Zhou Y."/>
            <person name="Sarkeshik A."/>
            <person name="Yates J.R. III"/>
            <person name="Thomson T.M."/>
            <person name="Zhang Z."/>
            <person name="Lee E.Y."/>
            <person name="Lee M.Y."/>
        </authorList>
    </citation>
    <scope>PROTEIN SEQUENCE OF 81-89; 156-173 AND 215-226</scope>
    <scope>FUNCTION</scope>
    <scope>SUBCELLULAR LOCATION</scope>
    <scope>MASS SPECTROMETRY</scope>
    <scope>MUTAGENESIS OF ARG-42</scope>
</reference>
<reference key="11">
    <citation type="journal article" date="2001" name="Eur. J. Biochem.">
        <title>N-terminally extended human ubiquitin-conjugating enzymes (E2s) mediate the ubiquitination of RING-finger proteins, ARA54 and RNF8.</title>
        <authorList>
            <person name="Ito K."/>
            <person name="Adachi S."/>
            <person name="Iwakami R."/>
            <person name="Yasuda H."/>
            <person name="Muto Y."/>
            <person name="Seki N."/>
            <person name="Okano Y."/>
        </authorList>
    </citation>
    <scope>FUNCTION</scope>
    <scope>SUBCELLULAR LOCATION</scope>
    <scope>INTERACTION WITH UBE2E1; UBE2E2 AND UBE2E3</scope>
    <scope>MUTAGENESIS OF CYS-403</scope>
</reference>
<reference key="12">
    <citation type="journal article" date="2004" name="J. Biol. Chem.">
        <title>The RING finger protein, RNF8, interacts with retinoid X receptor alpha and enhances its transcription-stimulating activity.</title>
        <authorList>
            <person name="Takano Y."/>
            <person name="Adachi S."/>
            <person name="Okuno M."/>
            <person name="Muto Y."/>
            <person name="Yoshioka T."/>
            <person name="Matsushima-Nishiwaki R."/>
            <person name="Tsurumi H."/>
            <person name="Ito K."/>
            <person name="Friedman S.L."/>
            <person name="Moriwaki H."/>
            <person name="Kojima S."/>
            <person name="Okano Y."/>
        </authorList>
    </citation>
    <scope>FUNCTION</scope>
    <scope>SUBCELLULAR LOCATION</scope>
    <scope>INTERACTION WITH RXRA</scope>
    <scope>MUTAGENESIS OF CYS-403</scope>
</reference>
<reference key="13">
    <citation type="journal article" date="2007" name="Cell">
        <title>RNF8 ubiquitylates histones at DNA double-strand breaks and promotes assembly of repair proteins.</title>
        <authorList>
            <person name="Mailand N."/>
            <person name="Bekker-Jensen S."/>
            <person name="Faustrup H."/>
            <person name="Melander F."/>
            <person name="Bartek J."/>
            <person name="Lukas C."/>
            <person name="Lukas J."/>
        </authorList>
    </citation>
    <scope>FUNCTION</scope>
    <scope>CATALYTIC ACTIVITY</scope>
    <scope>SUBCELLULAR LOCATION</scope>
    <scope>INTERACTION WITH MDC1</scope>
    <scope>DOMAIN</scope>
    <scope>MUTAGENESIS OF ARG-42 AND CYS-403</scope>
</reference>
<reference key="14">
    <citation type="journal article" date="2007" name="Proc. Natl. Acad. Sci. U.S.A.">
        <title>Ubc13/Rnf8 ubiquitin ligases control foci formation of the Rap80/Abraxas/Brca1/Brcc36 complex in response to DNA damage.</title>
        <authorList>
            <person name="Wang B."/>
            <person name="Elledge S.J."/>
        </authorList>
    </citation>
    <scope>FUNCTION</scope>
    <scope>SUBCELLULAR LOCATION</scope>
</reference>
<reference key="15">
    <citation type="journal article" date="2007" name="Science">
        <title>Orchestration of the DNA-damage response by the RNF8 ubiquitin ligase.</title>
        <authorList>
            <person name="Kolas N.K."/>
            <person name="Chapman J.R."/>
            <person name="Nakada S."/>
            <person name="Ylanko J."/>
            <person name="Chahwan R."/>
            <person name="Sweeney F.D."/>
            <person name="Panier S."/>
            <person name="Mendez M."/>
            <person name="Wildenhain J."/>
            <person name="Thomson T.M."/>
            <person name="Pelletier L."/>
            <person name="Jackson S.P."/>
            <person name="Durocher D."/>
        </authorList>
    </citation>
    <scope>FUNCTION</scope>
    <scope>INTERACTION WITH MDC1</scope>
</reference>
<reference key="16">
    <citation type="journal article" date="2008" name="Oncogene">
        <title>Regulation of mitotic exit by the RNF8 ubiquitin ligase.</title>
        <authorList>
            <person name="Plans V."/>
            <person name="Guerra-Rebollo M."/>
            <person name="Thomson T.M."/>
        </authorList>
    </citation>
    <scope>FUNCTION</scope>
    <scope>DEVELOPMENTAL STAGE</scope>
</reference>
<reference key="17">
    <citation type="journal article" date="2008" name="Cell Cycle">
        <title>PCNA is ubiquitinated by RNF8.</title>
        <authorList>
            <person name="Zhang S."/>
            <person name="Chea J."/>
            <person name="Meng X."/>
            <person name="Zhou Y."/>
            <person name="Lee E.Y.C."/>
            <person name="Lee M.Y.W.T."/>
        </authorList>
    </citation>
    <scope>FUNCTION</scope>
</reference>
<reference key="18">
    <citation type="journal article" date="2008" name="J. Biol. Chem.">
        <title>RNF8-dependent and RNF8-independent regulation of 53BP1 in response to DNA damage.</title>
        <authorList>
            <person name="Sakasai R."/>
            <person name="Tibbetts R."/>
        </authorList>
    </citation>
    <scope>FUNCTION</scope>
</reference>
<reference key="19">
    <citation type="journal article" date="2008" name="Mol. Cell. Biol.">
        <title>Noncanonical E2 variant-independent function of UBC13 in promoting checkpoint protein assembly.</title>
        <authorList>
            <person name="Huen M.S.Y."/>
            <person name="Huang J."/>
            <person name="Yuan J."/>
            <person name="Yamamoto M."/>
            <person name="Akira S."/>
            <person name="Ashley C."/>
            <person name="Xiao W."/>
            <person name="Chen J."/>
        </authorList>
    </citation>
    <scope>INTERACTION WITH UBE2N</scope>
</reference>
<reference key="20">
    <citation type="journal article" date="2008" name="Proc. Natl. Acad. Sci. U.S.A.">
        <title>A quantitative atlas of mitotic phosphorylation.</title>
        <authorList>
            <person name="Dephoure N."/>
            <person name="Zhou C."/>
            <person name="Villen J."/>
            <person name="Beausoleil S.A."/>
            <person name="Bakalarski C.E."/>
            <person name="Elledge S.J."/>
            <person name="Gygi S.P."/>
        </authorList>
    </citation>
    <scope>PHOSPHORYLATION [LARGE SCALE ANALYSIS] AT SER-157</scope>
    <scope>IDENTIFICATION BY MASS SPECTROMETRY [LARGE SCALE ANALYSIS]</scope>
    <source>
        <tissue>Cervix carcinoma</tissue>
    </source>
</reference>
<reference key="21">
    <citation type="journal article" date="2009" name="Sci. Signal.">
        <title>Quantitative phosphoproteomic analysis of T cell receptor signaling reveals system-wide modulation of protein-protein interactions.</title>
        <authorList>
            <person name="Mayya V."/>
            <person name="Lundgren D.H."/>
            <person name="Hwang S.-I."/>
            <person name="Rezaul K."/>
            <person name="Wu L."/>
            <person name="Eng J.K."/>
            <person name="Rodionov V."/>
            <person name="Han D.K."/>
        </authorList>
    </citation>
    <scope>PHOSPHORYLATION [LARGE SCALE ANALYSIS] AT SER-157</scope>
    <scope>IDENTIFICATION BY MASS SPECTROMETRY [LARGE SCALE ANALYSIS]</scope>
    <source>
        <tissue>Leukemic T-cell</tissue>
    </source>
</reference>
<reference key="22">
    <citation type="journal article" date="2010" name="Nat. Cell Biol.">
        <title>HERC2 coordinates ubiquitin-dependent assembly of DNA repair factors on damaged chromosomes.</title>
        <authorList>
            <person name="Bekker-Jensen S."/>
            <person name="Rendtlew Danielsen J."/>
            <person name="Fugger K."/>
            <person name="Gromova I."/>
            <person name="Nerstedt A."/>
            <person name="Lukas C."/>
            <person name="Bartek J."/>
            <person name="Lukas J."/>
            <person name="Mailand N."/>
        </authorList>
    </citation>
    <scope>INTERACTION WITH HERC2</scope>
</reference>
<reference key="23">
    <citation type="journal article" date="2009" name="Cell">
        <title>The RIDDLE syndrome protein mediates a ubiquitin-dependent signaling cascade at sites of DNA damage.</title>
        <authorList>
            <person name="Stewart G.S."/>
            <person name="Panier S."/>
            <person name="Townsend K."/>
            <person name="Al-Hakim A.K."/>
            <person name="Kolas N.K."/>
            <person name="Miller E.S."/>
            <person name="Nakada S."/>
            <person name="Ylanko J."/>
            <person name="Olivarius S."/>
            <person name="Mendez M."/>
            <person name="Oldreive C."/>
            <person name="Wildenhain J."/>
            <person name="Tagliaferro A."/>
            <person name="Pelletier L."/>
            <person name="Taubenheim N."/>
            <person name="Durandy A."/>
            <person name="Byrd P.J."/>
            <person name="Stankovic T."/>
            <person name="Taylor A.M.R."/>
            <person name="Durocher D."/>
        </authorList>
    </citation>
    <scope>FUNCTION</scope>
</reference>
<reference key="24">
    <citation type="journal article" date="2009" name="Cell">
        <title>RNF168 binds and amplifies ubiquitin conjugates on damaged chromosomes to allow accumulation of repair proteins.</title>
        <authorList>
            <person name="Doil C."/>
            <person name="Mailand N."/>
            <person name="Bekker-Jensen S."/>
            <person name="Menard P."/>
            <person name="Larsen D.H."/>
            <person name="Pepperkok R."/>
            <person name="Ellenberg J."/>
            <person name="Panier S."/>
            <person name="Durocher D."/>
            <person name="Bartek J."/>
            <person name="Lukas J."/>
            <person name="Lukas C."/>
        </authorList>
    </citation>
    <scope>FUNCTION</scope>
</reference>
<reference key="25">
    <citation type="journal article" date="2009" name="J. Biol. Chem.">
        <title>Accumulation of Pax2 transactivation domain interaction protein (PTIP) at sites of DNA breaks via RNF8-dependent pathway is required for cell survival after DNA damage.</title>
        <authorList>
            <person name="Gong Z."/>
            <person name="Cho Y.-W."/>
            <person name="Kim J.-E."/>
            <person name="Ge K."/>
            <person name="Chen J."/>
        </authorList>
    </citation>
    <scope>FUNCTION</scope>
    <scope>SUBCELLULAR LOCATION</scope>
</reference>
<reference key="26">
    <citation type="journal article" date="2009" name="Mol. Cell. Biol.">
        <title>Histone ubiquitination associates with BRCA1-dependent DNA damage response.</title>
        <authorList>
            <person name="Wu J."/>
            <person name="Huen M.S.Y."/>
            <person name="Lu L.-Y."/>
            <person name="Ye L."/>
            <person name="Dou Y."/>
            <person name="Ljungman M."/>
            <person name="Chen J."/>
            <person name="Yu X."/>
        </authorList>
    </citation>
    <scope>FUNCTION</scope>
</reference>
<reference key="27">
    <citation type="journal article" date="2009" name="Proc. Natl. Acad. Sci. U.S.A.">
        <title>The Rap80-BRCC36 de-ubiquitinating enzyme complex antagonizes RNF8-Ubc13-dependent ubiquitination events at DNA double strand breaks.</title>
        <authorList>
            <person name="Shao G."/>
            <person name="Lilli D.R."/>
            <person name="Patterson-Fortin J."/>
            <person name="Coleman K.A."/>
            <person name="Morrissey D.E."/>
            <person name="Greenberg R.A."/>
        </authorList>
    </citation>
    <scope>FUNCTION</scope>
</reference>
<reference key="28">
    <citation type="journal article" date="2010" name="Cell">
        <title>ATM-dependent chromatin changes silence transcription in cis to DNA double-strand breaks.</title>
        <authorList>
            <person name="Shanbhag N.M."/>
            <person name="Rafalska-Metcalf I.U."/>
            <person name="Balane-Bolivar C."/>
            <person name="Janicki S.M."/>
            <person name="Greenberg R.A."/>
        </authorList>
    </citation>
    <scope>FUNCTION</scope>
</reference>
<reference key="29">
    <citation type="journal article" date="2011" name="J. Biol. Chem.">
        <title>Critical roles of ring finger protein RNF8 in replication stress responses.</title>
        <authorList>
            <person name="Sy S.M."/>
            <person name="Jiang J."/>
            <person name="Dong S.S."/>
            <person name="Lok G.T."/>
            <person name="Wu J."/>
            <person name="Cai H."/>
            <person name="Yeung E.S."/>
            <person name="Huang J."/>
            <person name="Chen J."/>
            <person name="Deng Y."/>
            <person name="Huen M.S."/>
        </authorList>
    </citation>
    <scope>FUNCTION</scope>
</reference>
<reference key="30">
    <citation type="journal article" date="2011" name="Nat. Cell Biol.">
        <title>DNA-damage response and repair activities at uncapped telomeres depend on RNF8.</title>
        <authorList>
            <person name="Peuscher M.H."/>
            <person name="Jacobs J.J."/>
        </authorList>
    </citation>
    <scope>FUNCTION</scope>
    <scope>MUTAGENESIS OF ARG-42 AND CYS-406</scope>
</reference>
<reference key="31">
    <citation type="journal article" date="2012" name="Cancer Res.">
        <title>RNF8 regulates assembly of RAD51 at DNA double-strand breaks in the absence of BRCA1 and 53BP1.</title>
        <authorList>
            <person name="Nakada S."/>
            <person name="Yonamine R.M."/>
            <person name="Matsuo K."/>
        </authorList>
    </citation>
    <scope>FUNCTION</scope>
</reference>
<reference key="32">
    <citation type="journal article" date="2012" name="EMBO J.">
        <title>RNF8- and RNF168-dependent degradation of KDM4A/JMJD2A triggers 53BP1 recruitment to DNA damage sites.</title>
        <authorList>
            <person name="Mallette F.A."/>
            <person name="Mattiroli F."/>
            <person name="Cui G."/>
            <person name="Young L.C."/>
            <person name="Hendzel M.J."/>
            <person name="Mer G."/>
            <person name="Sixma T.K."/>
            <person name="Richard S."/>
        </authorList>
    </citation>
    <scope>FUNCTION IN UBIQUITINATION OF KDM4A</scope>
    <scope>MUTAGENESIS OF ILE-405</scope>
</reference>
<reference key="33">
    <citation type="journal article" date="2012" name="EMBO J.">
        <title>A new non-catalytic role for ubiquitin ligase RNF8 in unfolding higher-order chromatin structure.</title>
        <authorList>
            <person name="Luijsterburg M.S."/>
            <person name="Acs K."/>
            <person name="Ackermann L."/>
            <person name="Wiegant W.W."/>
            <person name="Bekker-Jensen S."/>
            <person name="Larsen D.H."/>
            <person name="Khanna K.K."/>
            <person name="van Attikum H."/>
            <person name="Mailand N."/>
            <person name="Dantuma N.P."/>
        </authorList>
    </citation>
    <scope>FUNCTION</scope>
</reference>
<reference key="34">
    <citation type="journal article" date="2012" name="J. Biol. Chem.">
        <title>The RING finger protein RNF8 ubiquitinates Nbs1 to promote DNA double-strand break repair by homologous recombination.</title>
        <authorList>
            <person name="Lu C.S."/>
            <person name="Truong L.N."/>
            <person name="Aslanian A."/>
            <person name="Shi L.Z."/>
            <person name="Li Y."/>
            <person name="Hwang P.Y."/>
            <person name="Koh K.H."/>
            <person name="Hunter T."/>
            <person name="Yates J.R. III"/>
            <person name="Berns M.W."/>
            <person name="Wu X."/>
        </authorList>
    </citation>
    <scope>FUNCTION</scope>
    <scope>CATALYTIC ACTIVITY</scope>
    <scope>PATHWAY</scope>
    <scope>MUTAGENESIS OF ARG-42</scope>
</reference>
<reference key="35">
    <citation type="journal article" date="2012" name="Mol. Cell">
        <title>Viral E3 ubiquitin ligase-mediated degradation of a cellular E3: viral mimicry of a cellular phosphorylation mark targets the RNF8 FHA domain.</title>
        <authorList>
            <person name="Chaurushiya M.S."/>
            <person name="Lilley C.E."/>
            <person name="Aslanian A."/>
            <person name="Meisenhelder J."/>
            <person name="Scott D.C."/>
            <person name="Landry S."/>
            <person name="Ticau S."/>
            <person name="Boutell C."/>
            <person name="Yates J.R. III"/>
            <person name="Schulman B.A."/>
            <person name="Hunter T."/>
            <person name="Weitzman M.D."/>
        </authorList>
    </citation>
    <scope>INTERACTION WITH HUMAN HERPESVIRUS 1 ICP0 (MICROBIAL INFECTION)</scope>
    <scope>MUTAGENESIS OF ARG-42</scope>
</reference>
<reference key="36">
    <citation type="journal article" date="2012" name="Mol. Cell">
        <title>A ubiquitin-binding protein, FAAP20, links RNF8-mediated ubiquitination to the Fanconi anemia DNA repair network.</title>
        <authorList>
            <person name="Yan Z."/>
            <person name="Guo R."/>
            <person name="Paramasivam M."/>
            <person name="Shen W."/>
            <person name="Ling C."/>
            <person name="Fox D. III"/>
            <person name="Wang Y."/>
            <person name="Oostra A.B."/>
            <person name="Kuehl J."/>
            <person name="Lee D.Y."/>
            <person name="Takata M."/>
            <person name="Hoatlin M.E."/>
            <person name="Schindler D."/>
            <person name="Joenje H."/>
            <person name="de Winter J.P."/>
            <person name="Li L."/>
            <person name="Seidman M.M."/>
            <person name="Wang W."/>
        </authorList>
    </citation>
    <scope>FUNCTION</scope>
</reference>
<reference key="37">
    <citation type="journal article" date="2012" name="Nat. Struct. Mol. Biol.">
        <title>The E3 ligase RNF8 regulates KU80 removal and NHEJ repair.</title>
        <authorList>
            <person name="Feng L."/>
            <person name="Chen J."/>
        </authorList>
    </citation>
    <scope>FUNCTION</scope>
    <scope>SUBCELLULAR LOCATION</scope>
    <scope>INTERACTION WITH UBE2N</scope>
</reference>
<reference key="38">
    <citation type="journal article" date="2012" name="Nucleic Acids Res.">
        <title>Differential regulation of RNF8-mediated Lys48- and Lys63-based poly-ubiquitylation.</title>
        <authorList>
            <person name="Lok G.T."/>
            <person name="Sy S.M."/>
            <person name="Dong S.S."/>
            <person name="Ching Y.P."/>
            <person name="Tsao S.W."/>
            <person name="Thomson T.M."/>
            <person name="Huen M.S."/>
        </authorList>
    </citation>
    <scope>FUNCTION</scope>
    <scope>MUTAGENESIS OF ILE-405</scope>
</reference>
<reference key="39">
    <citation type="journal article" date="2013" name="J. Proteome Res.">
        <title>Toward a comprehensive characterization of a human cancer cell phosphoproteome.</title>
        <authorList>
            <person name="Zhou H."/>
            <person name="Di Palma S."/>
            <person name="Preisinger C."/>
            <person name="Peng M."/>
            <person name="Polat A.N."/>
            <person name="Heck A.J."/>
            <person name="Mohammed S."/>
        </authorList>
    </citation>
    <scope>PHOSPHORYLATION [LARGE SCALE ANALYSIS] AT SER-157</scope>
    <scope>IDENTIFICATION BY MASS SPECTROMETRY [LARGE SCALE ANALYSIS]</scope>
    <source>
        <tissue>Cervix carcinoma</tissue>
        <tissue>Erythroleukemia</tissue>
    </source>
</reference>
<reference key="40">
    <citation type="journal article" date="2014" name="Genes Dev.">
        <title>The scaffold protein WRAP53beta orchestrates the ubiquitin response critical for DNA double-strand break repair.</title>
        <authorList>
            <person name="Henriksson S."/>
            <person name="Rassoolzadeh H."/>
            <person name="Hedstroem E."/>
            <person name="Coucoravas C."/>
            <person name="Julner A."/>
            <person name="Goldstein M."/>
            <person name="Imreh G."/>
            <person name="Zhivotovsky B."/>
            <person name="Kastan M.B."/>
            <person name="Helleday T."/>
            <person name="Farnebo M."/>
        </authorList>
    </citation>
    <scope>INTERACTION WITH WRAP53</scope>
</reference>
<reference key="41">
    <citation type="submission" date="2005-11" db="PDB data bank">
        <title>Solution structure of the FHA domain of human ubiquitin ligase protein RNF8.</title>
        <authorList>
            <consortium name="RIKEN structural genomics initiative (RSGI)"/>
        </authorList>
    </citation>
    <scope>STRUCTURE BY NMR OF 8-139</scope>
</reference>
<reference key="42">
    <citation type="journal article" date="2007" name="Cell">
        <title>RNF8 transduces the DNA-damage signal via histone ubiquitylation and checkpoint protein assembly.</title>
        <authorList>
            <person name="Huen M.S.Y."/>
            <person name="Grant R."/>
            <person name="Manke I."/>
            <person name="Minn K."/>
            <person name="Yu X."/>
            <person name="Yaffe M.B."/>
            <person name="Chen J."/>
        </authorList>
    </citation>
    <scope>X-RAY CRYSTALLOGRAPHY (1.35 ANGSTROMS) OF 13-146 IN COMPLEX WITH PHOSPHOPEPTIDE</scope>
    <scope>FUNCTION</scope>
    <scope>CATALYTIC ACTIVITY</scope>
    <scope>SUBCELLULAR LOCATION</scope>
</reference>
<reference key="43">
    <citation type="journal article" date="2012" name="Cell">
        <title>RNF168 ubiquitinates K13-15 on H2A/H2AX to drive DNA Damage signaling.</title>
        <authorList>
            <person name="Mattiroli F."/>
            <person name="Vissers J.H."/>
            <person name="van Dijk W.J."/>
            <person name="Ikpa P."/>
            <person name="Citterio E."/>
            <person name="Vermeulen W."/>
            <person name="Marteijn J.A."/>
            <person name="Sixma T.K."/>
        </authorList>
    </citation>
    <scope>X-RAY CRYSTALLOGRAPHY (1.9 ANGSTROMS) OF 351-483 IN COMPLEX WITH ZINC</scope>
    <scope>SUBUNIT</scope>
    <scope>FUNCTION</scope>
    <scope>MUTAGENESIS OF ASP-443</scope>
</reference>
<reference key="44">
    <citation type="journal article" date="2012" name="J. Biol. Chem.">
        <title>Molecular insights into the function of RING Finger (RNF)-containing proteins hRNF8 and hRNF168 in Ubc13/Mms2-dependent ubiquitylation.</title>
        <authorList>
            <person name="Campbell S.J."/>
            <person name="Edwards R.A."/>
            <person name="Leung C.C."/>
            <person name="Neculai D."/>
            <person name="Hodge C.D."/>
            <person name="Dhe-Paganon S."/>
            <person name="Glover J.N."/>
        </authorList>
    </citation>
    <scope>X-RAY CRYSTALLOGRAPHY (4.8 ANGSTROMS) OF 345-485 IN COMPLEX WITH UBE2N</scope>
    <scope>MUTAGENESIS OF ILE-405</scope>
</reference>
<organism>
    <name type="scientific">Homo sapiens</name>
    <name type="common">Human</name>
    <dbReference type="NCBI Taxonomy" id="9606"/>
    <lineage>
        <taxon>Eukaryota</taxon>
        <taxon>Metazoa</taxon>
        <taxon>Chordata</taxon>
        <taxon>Craniata</taxon>
        <taxon>Vertebrata</taxon>
        <taxon>Euteleostomi</taxon>
        <taxon>Mammalia</taxon>
        <taxon>Eutheria</taxon>
        <taxon>Euarchontoglires</taxon>
        <taxon>Primates</taxon>
        <taxon>Haplorrhini</taxon>
        <taxon>Catarrhini</taxon>
        <taxon>Hominidae</taxon>
        <taxon>Homo</taxon>
    </lineage>
</organism>
<proteinExistence type="evidence at protein level"/>
<comment type="function">
    <text evidence="4 5 7 8 9 10 11 12 14 15 16 17 18 19 21 22 23 24 25 26 28 30 31 32 33 34">E3 ubiquitin-protein ligase that plays a key role in DNA damage signaling via 2 distinct roles: by mediating the 'Lys-63'-linked ubiquitination of histones H2A and H2AX and promoting the recruitment of DNA repair proteins at double-strand breaks (DSBs) sites, and by catalyzing 'Lys-48'-linked ubiquitination to remove target proteins from DNA damage sites. Following DNA DSBs, it is recruited to the sites of damage by ATM-phosphorylated MDC1 and catalyzes the 'Lys-63'-linked ubiquitination of histones H2A and H2AX, thereby promoting the formation of TP53BP1 and BRCA1 ionizing radiation-induced foci (IRIF) (PubMed:18001824, PubMed:18006705). Also controls the recruitment of UIMC1-BRCC3 (RAP80-BRCC36) and PAXIP1/PTIP to DNA damage sites (PubMed:18077395, PubMed:19202061). Promotes the recruitment of NBN to DNA damage sites by catalyzing 'Lys-6'-linked ubiquitination of NBN (PubMed:23115235). Also recruited at DNA interstrand cross-links (ICLs) sites and catalyzes 'Lys-63'-linked ubiquitination of histones H2A and H2AX, leading to recruitment of FAAP20/C1orf86 and Fanconi anemia (FA) complex, followed by interstrand cross-link repair. H2A ubiquitination also mediates the ATM-dependent transcriptional silencing at regions flanking DSBs in cis, a mechanism to avoid collision between transcription and repair intermediates. Promotes the formation of 'Lys-63'-linked polyubiquitin chains via interactions with the specific ubiquitin-conjugating UBE2N/UBC13 and ubiquitinates non-histone substrates such as PCNA. Substrates that are polyubiquitinated at 'Lys-63' are usually not targeted for degradation. Also catalyzes the formation of 'Lys-48'-linked polyubiquitin chains via interaction with the ubiquitin-conjugating UBE2L6/UBCH8, leading to degradation of substrate proteins such as CHEK2, JMJD2A/KDM4A and KU80/XRCC5: it is still unclear how the preference toward 'Lys-48'- versus 'Lys-63'-linked ubiquitination is regulated but it could be due to RNF8 ability to interact with specific E2 specific ligases. For instance, interaction with phosphorylated HERC2 promotes the association between RNF8 and UBE2N/UBC13 and favors the specific formation of 'Lys-63'-linked ubiquitin chains. Promotes non-homologous end joining (NHEJ) by promoting the 'Lys-48'-linked ubiquitination and degradation the of KU80/XRCC5. Following DNA damage, mediates the ubiquitination and degradation of JMJD2A/KDM4A in collaboration with RNF168, leading to unmask H4K20me2 mark and promote the recruitment of TP53BP1 at DNA damage sites (PubMed:11322894, PubMed:14981089, PubMed:17724460, PubMed:18001825, PubMed:18337245, PubMed:18948756, PubMed:19015238, PubMed:19124460, PubMed:19203578, PubMed:19203579, PubMed:20550933, PubMed:21558560, PubMed:21857671, PubMed:21911360, PubMed:22266820, PubMed:22373579, PubMed:22531782, PubMed:22705371, PubMed:22980979). Following DNA damage, mediates the ubiquitination and degradation of POLD4/p12, a subunit of DNA polymerase delta. In the absence of POLD4, DNA polymerase delta complex exhibits higher proofreading activity (PubMed:23233665). In addition to its function in damage signaling, also plays a role in higher-order chromatin structure by mediating extensive chromatin decondensation. Involved in the activation of ATM by promoting histone H2B ubiquitination, which indirectly triggers histone H4 'Lys-16' acetylation (H4K16ac), establishing a chromatin environment that promotes efficient activation of ATM kinase. Required in the testis, where it plays a role in the replacement of histones during spermatogenesis. At uncapped telomeres, promotes the joining of deprotected chromosome ends by inducing H2A ubiquitination and TP53BP1 recruitment, suggesting that it may enhance cancer development by aggravating telomere-induced genome instability in case of telomeric crisis. Promotes the assembly of RAD51 at DNA DSBs in the absence of BRCA1 and TP53BP1 Also involved in class switch recombination in immune system, via its role in regulation of DSBs repair (PubMed:22865450). May be required for proper exit from mitosis after spindle checkpoint activation and may regulate cytokinesis. May play a role in the regulation of RXRA-mediated transcriptional activity. Not involved in RXRA ubiquitination by UBE2E2 (PubMed:11322894, PubMed:14981089, PubMed:17724460, PubMed:18001825, PubMed:18337245, PubMed:18948756, PubMed:19015238, PubMed:19124460, PubMed:19203578, PubMed:19203579, PubMed:20550933, PubMed:21558560, PubMed:21857671, PubMed:21911360, PubMed:22266820, PubMed:22373579, PubMed:22531782, PubMed:22705371, PubMed:22980979).</text>
</comment>
<comment type="catalytic activity">
    <reaction evidence="33">
        <text>S-ubiquitinyl-[E2 ubiquitin-conjugating enzyme]-L-cysteine + [acceptor protein]-L-lysine = [E2 ubiquitin-conjugating enzyme]-L-cysteine + N(6)-ubiquitinyl-[acceptor protein]-L-lysine.</text>
        <dbReference type="EC" id="2.3.2.27"/>
    </reaction>
</comment>
<comment type="pathway">
    <text evidence="33">Protein modification; protein ubiquitination.</text>
</comment>
<comment type="subunit">
    <text evidence="1 4 5 6 8 9 10 13 20 25 29 32 35">Homodimer. Forms a E2-E3 ubiquitin ligase complex composed of the RNF8 homodimer and a E2 heterodimer of UBE2N and UBE2V2. Interacts with class III E2s, including UBE2E1, UBE2E2, and UBE2E3 and with UBE2N. Interacts with RXRA. Interacts (via FHA domain) with ATM-phosphorylated MDC1. Interacts (via FHA domain) with 'Thr-4827' phosphorylated HERC2 (via C-terminus). Interacts with PIWIL1; leading to sequester RNF8 in the cytoplasm (By similarity). Interacts with WRAP53/TCAB1 (PubMed:25512560).</text>
</comment>
<comment type="subunit">
    <text evidence="27">(Microbial infection) Interacts (via FHA domain) with phosphorylated human herpesvirus 1 ICP0 protein; leading to RNF8 degradation by the proteasome.</text>
</comment>
<comment type="interaction">
    <interactant intactId="EBI-373337">
        <id>O76064</id>
    </interactant>
    <interactant intactId="EBI-746752">
        <id>Q9Y2J4</id>
        <label>AMOTL2</label>
    </interactant>
    <organismsDiffer>false</organismsDiffer>
    <experiments>3</experiments>
</comment>
<comment type="interaction">
    <interactant intactId="EBI-373337">
        <id>O76064</id>
    </interactant>
    <interactant intactId="EBI-739879">
        <id>Q53TS8</id>
        <label>C2CD6</label>
    </interactant>
    <organismsDiffer>false</organismsDiffer>
    <experiments>3</experiments>
</comment>
<comment type="interaction">
    <interactant intactId="EBI-373337">
        <id>O76064</id>
    </interactant>
    <interactant intactId="EBI-749920">
        <id>Q9P1Z2</id>
        <label>CALCOCO1</label>
    </interactant>
    <organismsDiffer>false</organismsDiffer>
    <experiments>3</experiments>
</comment>
<comment type="interaction">
    <interactant intactId="EBI-373337">
        <id>O76064</id>
    </interactant>
    <interactant intactId="EBI-12105646">
        <id>Q49A88-3</id>
        <label>CCDC14</label>
    </interactant>
    <organismsDiffer>false</organismsDiffer>
    <experiments>3</experiments>
</comment>
<comment type="interaction">
    <interactant intactId="EBI-373337">
        <id>O76064</id>
    </interactant>
    <interactant intactId="EBI-723996">
        <id>Q8IVM0</id>
        <label>CCDC50</label>
    </interactant>
    <organismsDiffer>false</organismsDiffer>
    <experiments>3</experiments>
</comment>
<comment type="interaction">
    <interactant intactId="EBI-373337">
        <id>O76064</id>
    </interactant>
    <interactant intactId="EBI-744115">
        <id>Q9C0F1</id>
        <label>CEP44</label>
    </interactant>
    <organismsDiffer>false</organismsDiffer>
    <experiments>4</experiments>
</comment>
<comment type="interaction">
    <interactant intactId="EBI-373337">
        <id>O76064</id>
    </interactant>
    <interactant intactId="EBI-12368239">
        <id>Q6P2H3-3</id>
        <label>CEP85</label>
    </interactant>
    <organismsDiffer>false</organismsDiffer>
    <experiments>3</experiments>
</comment>
<comment type="interaction">
    <interactant intactId="EBI-373337">
        <id>O76064</id>
    </interactant>
    <interactant intactId="EBI-750020">
        <id>P49760</id>
        <label>CLK2</label>
    </interactant>
    <organismsDiffer>false</organismsDiffer>
    <experiments>5</experiments>
</comment>
<comment type="interaction">
    <interactant intactId="EBI-373337">
        <id>O76064</id>
    </interactant>
    <interactant intactId="EBI-745579">
        <id>P49761</id>
        <label>CLK3</label>
    </interactant>
    <organismsDiffer>false</organismsDiffer>
    <experiments>3</experiments>
</comment>
<comment type="interaction">
    <interactant intactId="EBI-373337">
        <id>O76064</id>
    </interactant>
    <interactant intactId="EBI-742054">
        <id>Q96D03</id>
        <label>DDIT4L</label>
    </interactant>
    <organismsDiffer>false</organismsDiffer>
    <experiments>3</experiments>
</comment>
<comment type="interaction">
    <interactant intactId="EBI-373337">
        <id>O76064</id>
    </interactant>
    <interactant intactId="EBI-346547">
        <id>P50570</id>
        <label>DNM2</label>
    </interactant>
    <organismsDiffer>false</organismsDiffer>
    <experiments>3</experiments>
</comment>
<comment type="interaction">
    <interactant intactId="EBI-373337">
        <id>O76064</id>
    </interactant>
    <interactant intactId="EBI-5666736">
        <id>Q5QJE6</id>
        <label>DNTTIP2</label>
    </interactant>
    <organismsDiffer>false</organismsDiffer>
    <experiments>3</experiments>
</comment>
<comment type="interaction">
    <interactant intactId="EBI-373337">
        <id>O76064</id>
    </interactant>
    <interactant intactId="EBI-12135243">
        <id>O95208-2</id>
        <label>EPN2</label>
    </interactant>
    <organismsDiffer>false</organismsDiffer>
    <experiments>3</experiments>
</comment>
<comment type="interaction">
    <interactant intactId="EBI-373337">
        <id>O76064</id>
    </interactant>
    <interactant intactId="EBI-12866582">
        <id>I6L9I8</id>
        <label>EPN3</label>
    </interactant>
    <organismsDiffer>false</organismsDiffer>
    <experiments>3</experiments>
</comment>
<comment type="interaction">
    <interactant intactId="EBI-373337">
        <id>O76064</id>
    </interactant>
    <interactant intactId="EBI-726822">
        <id>Q9BPY3</id>
        <label>FAM118B</label>
    </interactant>
    <organismsDiffer>false</organismsDiffer>
    <experiments>3</experiments>
</comment>
<comment type="interaction">
    <interactant intactId="EBI-373337">
        <id>O76064</id>
    </interactant>
    <interactant intactId="EBI-10175124">
        <id>Q8IZU0</id>
        <label>FAM9B</label>
    </interactant>
    <organismsDiffer>false</organismsDiffer>
    <experiments>3</experiments>
</comment>
<comment type="interaction">
    <interactant intactId="EBI-373337">
        <id>O76064</id>
    </interactant>
    <interactant intactId="EBI-5661036">
        <id>A1L4K1</id>
        <label>FSD2</label>
    </interactant>
    <organismsDiffer>false</organismsDiffer>
    <experiments>3</experiments>
</comment>
<comment type="interaction">
    <interactant intactId="EBI-373337">
        <id>O76064</id>
    </interactant>
    <interactant intactId="EBI-473189">
        <id>Q96D09</id>
        <label>GPRASP2</label>
    </interactant>
    <organismsDiffer>false</organismsDiffer>
    <experiments>3</experiments>
</comment>
<comment type="interaction">
    <interactant intactId="EBI-373337">
        <id>O76064</id>
    </interactant>
    <interactant intactId="EBI-10172004">
        <id>Q8IX15-3</id>
        <label>HOMEZ</label>
    </interactant>
    <organismsDiffer>false</organismsDiffer>
    <experiments>3</experiments>
</comment>
<comment type="interaction">
    <interactant intactId="EBI-373337">
        <id>O76064</id>
    </interactant>
    <interactant intactId="EBI-2556193">
        <id>Q63ZY3</id>
        <label>KANK2</label>
    </interactant>
    <organismsDiffer>false</organismsDiffer>
    <experiments>3</experiments>
</comment>
<comment type="interaction">
    <interactant intactId="EBI-373337">
        <id>O76064</id>
    </interactant>
    <interactant intactId="EBI-10213781">
        <id>Q5T7B8-2</id>
        <label>KIF24</label>
    </interactant>
    <organismsDiffer>false</organismsDiffer>
    <experiments>3</experiments>
</comment>
<comment type="interaction">
    <interactant intactId="EBI-373337">
        <id>O76064</id>
    </interactant>
    <interactant intactId="EBI-10171774">
        <id>P60410</id>
        <label>KRTAP10-8</label>
    </interactant>
    <organismsDiffer>false</organismsDiffer>
    <experiments>3</experiments>
</comment>
<comment type="interaction">
    <interactant intactId="EBI-373337">
        <id>O76064</id>
    </interactant>
    <interactant intactId="EBI-1044640">
        <id>Q9BYQ4</id>
        <label>KRTAP9-2</label>
    </interactant>
    <organismsDiffer>false</organismsDiffer>
    <experiments>3</experiments>
</comment>
<comment type="interaction">
    <interactant intactId="EBI-373337">
        <id>O76064</id>
    </interactant>
    <interactant intactId="EBI-11958364">
        <id>Q9BYQ0</id>
        <label>KRTAP9-8</label>
    </interactant>
    <organismsDiffer>false</organismsDiffer>
    <experiments>3</experiments>
</comment>
<comment type="interaction">
    <interactant intactId="EBI-373337">
        <id>O76064</id>
    </interactant>
    <interactant intactId="EBI-2798728">
        <id>P61968</id>
        <label>LMO4</label>
    </interactant>
    <organismsDiffer>false</organismsDiffer>
    <experiments>3</experiments>
</comment>
<comment type="interaction">
    <interactant intactId="EBI-373337">
        <id>O76064</id>
    </interactant>
    <interactant intactId="EBI-742610">
        <id>Q9Y6D9</id>
        <label>MAD1L1</label>
    </interactant>
    <organismsDiffer>false</organismsDiffer>
    <experiments>7</experiments>
</comment>
<comment type="interaction">
    <interactant intactId="EBI-373337">
        <id>O76064</id>
    </interactant>
    <interactant intactId="EBI-959949">
        <id>P28482</id>
        <label>MAPK1</label>
    </interactant>
    <organismsDiffer>false</organismsDiffer>
    <experiments>3</experiments>
</comment>
<comment type="interaction">
    <interactant intactId="EBI-373337">
        <id>O76064</id>
    </interactant>
    <interactant intactId="EBI-495644">
        <id>Q14676</id>
        <label>MDC1</label>
    </interactant>
    <organismsDiffer>false</organismsDiffer>
    <experiments>11</experiments>
</comment>
<comment type="interaction">
    <interactant intactId="EBI-373337">
        <id>O76064</id>
    </interactant>
    <interactant intactId="EBI-2563309">
        <id>P49585</id>
        <label>PCYT1A</label>
    </interactant>
    <organismsDiffer>false</organismsDiffer>
    <experiments>3</experiments>
</comment>
<comment type="interaction">
    <interactant intactId="EBI-373337">
        <id>O76064</id>
    </interactant>
    <interactant intactId="EBI-1050125">
        <id>O15173</id>
        <label>PGRMC2</label>
    </interactant>
    <organismsDiffer>false</organismsDiffer>
    <experiments>3</experiments>
</comment>
<comment type="interaction">
    <interactant intactId="EBI-373337">
        <id>O76064</id>
    </interactant>
    <interactant intactId="EBI-79165">
        <id>Q9NRD5</id>
        <label>PICK1</label>
    </interactant>
    <organismsDiffer>false</organismsDiffer>
    <experiments>3</experiments>
</comment>
<comment type="interaction">
    <interactant intactId="EBI-373337">
        <id>O76064</id>
    </interactant>
    <interactant intactId="EBI-302355">
        <id>Q9UL42</id>
        <label>PNMA2</label>
    </interactant>
    <organismsDiffer>false</organismsDiffer>
    <experiments>7</experiments>
</comment>
<comment type="interaction">
    <interactant intactId="EBI-373337">
        <id>O76064</id>
    </interactant>
    <interactant intactId="EBI-724333">
        <id>Q96CD2</id>
        <label>PPCDC</label>
    </interactant>
    <organismsDiffer>false</organismsDiffer>
    <experiments>3</experiments>
</comment>
<comment type="interaction">
    <interactant intactId="EBI-373337">
        <id>O76064</id>
    </interactant>
    <interactant intactId="EBI-372273">
        <id>P20618</id>
        <label>PSMB1</label>
    </interactant>
    <organismsDiffer>false</organismsDiffer>
    <experiments>3</experiments>
</comment>
<comment type="interaction">
    <interactant intactId="EBI-373337">
        <id>O76064</id>
    </interactant>
    <interactant intactId="EBI-746056">
        <id>O43251</id>
        <label>RBFOX2</label>
    </interactant>
    <organismsDiffer>false</organismsDiffer>
    <experiments>3</experiments>
</comment>
<comment type="interaction">
    <interactant intactId="EBI-373337">
        <id>O76064</id>
    </interactant>
    <interactant intactId="EBI-11963050">
        <id>O43251-10</id>
        <label>RBFOX2</label>
    </interactant>
    <organismsDiffer>false</organismsDiffer>
    <experiments>3</experiments>
</comment>
<comment type="interaction">
    <interactant intactId="EBI-373337">
        <id>O76064</id>
    </interactant>
    <interactant intactId="EBI-373337">
        <id>O76064</id>
        <label>RNF8</label>
    </interactant>
    <organismsDiffer>false</organismsDiffer>
    <experiments>6</experiments>
</comment>
<comment type="interaction">
    <interactant intactId="EBI-373337">
        <id>O76064</id>
    </interactant>
    <interactant intactId="EBI-17247926">
        <id>Q9NY72</id>
        <label>SCN3B</label>
    </interactant>
    <organismsDiffer>false</organismsDiffer>
    <experiments>3</experiments>
</comment>
<comment type="interaction">
    <interactant intactId="EBI-373337">
        <id>O76064</id>
    </interactant>
    <interactant intactId="EBI-727037">
        <id>Q9UH03</id>
        <label>SEPTIN3</label>
    </interactant>
    <organismsDiffer>false</organismsDiffer>
    <experiments>7</experiments>
</comment>
<comment type="interaction">
    <interactant intactId="EBI-373337">
        <id>O76064</id>
    </interactant>
    <interactant intactId="EBI-6503765">
        <id>Q8IVP1</id>
        <label>SH3GL3</label>
    </interactant>
    <organismsDiffer>false</organismsDiffer>
    <experiments>3</experiments>
</comment>
<comment type="interaction">
    <interactant intactId="EBI-373337">
        <id>O76064</id>
    </interactant>
    <interactant intactId="EBI-714135">
        <id>O75558</id>
        <label>STX11</label>
    </interactant>
    <organismsDiffer>false</organismsDiffer>
    <experiments>6</experiments>
</comment>
<comment type="interaction">
    <interactant intactId="EBI-373337">
        <id>O76064</id>
    </interactant>
    <interactant intactId="EBI-8649725">
        <id>Q9BSE2</id>
        <label>TMEM79</label>
    </interactant>
    <organismsDiffer>false</organismsDiffer>
    <experiments>10</experiments>
</comment>
<comment type="interaction">
    <interactant intactId="EBI-373337">
        <id>O76064</id>
    </interactant>
    <interactant intactId="EBI-357849">
        <id>Q15025</id>
        <label>TNIP1</label>
    </interactant>
    <organismsDiffer>false</organismsDiffer>
    <experiments>3</experiments>
</comment>
<comment type="interaction">
    <interactant intactId="EBI-373337">
        <id>O76064</id>
    </interactant>
    <interactant intactId="EBI-11954062">
        <id>Q6UXN7</id>
        <label>TOMM20L</label>
    </interactant>
    <organismsDiffer>false</organismsDiffer>
    <experiments>3</experiments>
</comment>
<comment type="interaction">
    <interactant intactId="EBI-373337">
        <id>O76064</id>
    </interactant>
    <interactant intactId="EBI-347677">
        <id>P62837</id>
        <label>UBE2D2</label>
    </interactant>
    <organismsDiffer>false</organismsDiffer>
    <experiments>4</experiments>
</comment>
<comment type="interaction">
    <interactant intactId="EBI-373337">
        <id>O76064</id>
    </interactant>
    <interactant intactId="EBI-355164">
        <id>P55072</id>
        <label>VCP</label>
    </interactant>
    <organismsDiffer>false</organismsDiffer>
    <experiments>3</experiments>
</comment>
<comment type="interaction">
    <interactant intactId="EBI-373337">
        <id>O76064</id>
    </interactant>
    <interactant intactId="EBI-1769146">
        <id>Q99986</id>
        <label>VRK1</label>
    </interactant>
    <organismsDiffer>false</organismsDiffer>
    <experiments>2</experiments>
</comment>
<comment type="interaction">
    <interactant intactId="EBI-373337">
        <id>O76064</id>
    </interactant>
    <interactant intactId="EBI-712969">
        <id>Q9Y3C0</id>
        <label>WASHC3</label>
    </interactant>
    <organismsDiffer>false</organismsDiffer>
    <experiments>3</experiments>
</comment>
<comment type="interaction">
    <interactant intactId="EBI-373337">
        <id>O76064</id>
    </interactant>
    <interactant intactId="EBI-957615">
        <id>O00401</id>
        <label>WASL</label>
    </interactant>
    <organismsDiffer>false</organismsDiffer>
    <experiments>8</experiments>
</comment>
<comment type="interaction">
    <interactant intactId="EBI-373337">
        <id>O76064</id>
    </interactant>
    <interactant intactId="EBI-12017160">
        <id>Q96DT7-3</id>
        <label>ZBTB10</label>
    </interactant>
    <organismsDiffer>false</organismsDiffer>
    <experiments>3</experiments>
</comment>
<comment type="interaction">
    <interactant intactId="EBI-373337">
        <id>O76064</id>
    </interactant>
    <interactant intactId="EBI-2462313">
        <id>Q9UL40</id>
        <label>ZNF346</label>
    </interactant>
    <organismsDiffer>false</organismsDiffer>
    <experiments>3</experiments>
</comment>
<comment type="interaction">
    <interactant intactId="EBI-373337">
        <id>O76064</id>
    </interactant>
    <interactant intactId="EBI-743906">
        <id>Q96IT1</id>
        <label>ZNF496</label>
    </interactant>
    <organismsDiffer>false</organismsDiffer>
    <experiments>3</experiments>
</comment>
<comment type="interaction">
    <interactant intactId="EBI-15964690">
        <id>O76064-1</id>
    </interactant>
    <interactant intactId="EBI-495644">
        <id>Q14676</id>
        <label>MDC1</label>
    </interactant>
    <organismsDiffer>false</organismsDiffer>
    <experiments>2</experiments>
</comment>
<comment type="subcellular location">
    <subcellularLocation>
        <location evidence="2 4 5 6 34">Nucleus</location>
    </subcellularLocation>
    <subcellularLocation>
        <location evidence="2">Cytoplasm</location>
    </subcellularLocation>
    <subcellularLocation>
        <location evidence="2">Midbody</location>
    </subcellularLocation>
    <subcellularLocation>
        <location evidence="2">Chromosome</location>
        <location evidence="2">Telomere</location>
    </subcellularLocation>
    <text evidence="2 8 11 25 34">Recruited at uncapped telomeres (By similarity). Following DNA damage, such as double-strand breaks, recruited to the sites of damage (PubMed:18001824, PubMed:18077395, PubMed:22266820, PubMed:23233665). During prophase, concomitant with nuclear envelope breakdown, localizes throughout the cell, with a dotted pattern. In telophase, again in the nucleus and also with a discrete dotted pattern in the cytoplasm. In late telophase and during cytokinesis, localizes in the midbody of the tubulin bridge joining the daughter cells. Does not seem to be associated with condensed chromosomes at any time during the cell cycle. During spermatogenesis, sequestered in the cytoplasm by PIWIL1: RNF8 is released following ubiquitination and degradation of PIWIL1.</text>
</comment>
<comment type="alternative products">
    <event type="alternative splicing"/>
    <isoform>
        <id>O76064-1</id>
        <name>1</name>
        <sequence type="displayed"/>
    </isoform>
    <isoform>
        <id>O76064-2</id>
        <name>2</name>
        <sequence type="described" ref="VSP_036671 VSP_037831"/>
    </isoform>
    <isoform>
        <id>O76064-3</id>
        <name>3</name>
        <sequence type="described" ref="VSP_054037 VSP_054038"/>
    </isoform>
</comment>
<comment type="tissue specificity">
    <text evidence="6 36">Ubiquitous. In fetal tissues, highest expression in brain, thymus and liver. In adult tissues, highest levels in brain and testis, lowest levels in peripheral blood cells.</text>
</comment>
<comment type="developmental stage">
    <text evidence="7">Low levels at the G1-S boundary increase in intensity during S phase and until the end of the G2 phase. Abruptly decreases in late mitosis (at protein level). Barely detectable in anaphase.</text>
</comment>
<comment type="domain">
    <text evidence="8 34">The FHA domain specifically recognizes and binds ATM-phosphorylated MDC1 and 'Thr-4827' phosphorylated HERC2 (PubMed:18001824). This domain is required for proper recruitment to DNA damage sites after UV irradiation, ionizing radiation, or treatment with an alkylating agent (PubMed:23233665).</text>
</comment>
<comment type="PTM">
    <text evidence="2 6">Autoubiquitinated through 'Lys-48' and 'Lys-63' of ubiquitin. 'Lys-63' polyubiquitination is mediated by UBE2N. 'Lys-29'-type polyubiquitination is also observed, but it doesn't require its own functional RING-type zinc finger.</text>
</comment>
<comment type="miscellaneous">
    <molecule>Isoform 2</molecule>
    <text evidence="38">May be produced at very low levels due to a premature stop codon in the mRNA, leading to nonsense-mediated mRNA decay.</text>
</comment>
<comment type="similarity">
    <text evidence="2">Belongs to the RNF8 family.</text>
</comment>
<comment type="caution">
    <text evidence="2 39">According to a well-established model, RNF8 initiate H2A 'Lys-63'-linked ubiquitination leading to recruitment of RNF168 to amplify H2A 'Lys-63'-linked ubiquitination (PubMed:19203578, PubMed:19203579). However, other data suggest that RNF168 is the priming ubiquitin ligase by mediating monoubiquitination of 'Lys-13' and 'Lys-15' of nucleosomal histone H2A (H2AK13Ub and H2AK15Ub respectively) (PubMed:22980979). These data suggest that RNF168 might be recruited to DSBs sites in a RNF8-dependent manner by binding to non-histone proteins ubiquitinated via 'Lys-63'-linked and initiates monoubiquitination of H2A, which is then amplified by RNF8 (PubMed:22980979). Additional evidence is however required to confirm these data.</text>
</comment>
<comment type="sequence caution" evidence="38">
    <conflict type="erroneous initiation">
        <sequence resource="EMBL-CDS" id="BAA31621"/>
    </conflict>
    <text>Truncated N-terminus.</text>
</comment>
<comment type="sequence caution" evidence="38">
    <conflict type="erroneous translation">
        <sequence resource="EMBL-CDS" id="BAG60572"/>
    </conflict>
    <text>Wrong choice of CDS.</text>
</comment>
<comment type="sequence caution" evidence="38">
    <conflict type="erroneous gene model prediction">
        <sequence resource="EMBL-CDS" id="EAX03945"/>
    </conflict>
</comment>
<protein>
    <recommendedName>
        <fullName evidence="2">E3 ubiquitin-protein ligase RNF8</fullName>
        <shortName>hRNF8</shortName>
        <ecNumber evidence="2 33">2.3.2.27</ecNumber>
    </recommendedName>
    <alternativeName>
        <fullName evidence="2">RING finger protein 8</fullName>
    </alternativeName>
    <alternativeName>
        <fullName evidence="2">RING-type E3 ubiquitin transferase RNF8</fullName>
    </alternativeName>
</protein>
<evidence type="ECO:0000250" key="1">
    <source>
        <dbReference type="UniProtKB" id="Q8VC56"/>
    </source>
</evidence>
<evidence type="ECO:0000255" key="2">
    <source>
        <dbReference type="HAMAP-Rule" id="MF_03067"/>
    </source>
</evidence>
<evidence type="ECO:0000256" key="3">
    <source>
        <dbReference type="SAM" id="MobiDB-lite"/>
    </source>
</evidence>
<evidence type="ECO:0000269" key="4">
    <source>
    </source>
</evidence>
<evidence type="ECO:0000269" key="5">
    <source>
    </source>
</evidence>
<evidence type="ECO:0000269" key="6">
    <source>
    </source>
</evidence>
<evidence type="ECO:0000269" key="7">
    <source>
    </source>
</evidence>
<evidence type="ECO:0000269" key="8">
    <source>
    </source>
</evidence>
<evidence type="ECO:0000269" key="9">
    <source>
    </source>
</evidence>
<evidence type="ECO:0000269" key="10">
    <source>
    </source>
</evidence>
<evidence type="ECO:0000269" key="11">
    <source>
    </source>
</evidence>
<evidence type="ECO:0000269" key="12">
    <source>
    </source>
</evidence>
<evidence type="ECO:0000269" key="13">
    <source>
    </source>
</evidence>
<evidence type="ECO:0000269" key="14">
    <source>
    </source>
</evidence>
<evidence type="ECO:0000269" key="15">
    <source>
    </source>
</evidence>
<evidence type="ECO:0000269" key="16">
    <source>
    </source>
</evidence>
<evidence type="ECO:0000269" key="17">
    <source>
    </source>
</evidence>
<evidence type="ECO:0000269" key="18">
    <source>
    </source>
</evidence>
<evidence type="ECO:0000269" key="19">
    <source>
    </source>
</evidence>
<evidence type="ECO:0000269" key="20">
    <source>
    </source>
</evidence>
<evidence type="ECO:0000269" key="21">
    <source>
    </source>
</evidence>
<evidence type="ECO:0000269" key="22">
    <source>
    </source>
</evidence>
<evidence type="ECO:0000269" key="23">
    <source>
    </source>
</evidence>
<evidence type="ECO:0000269" key="24">
    <source>
    </source>
</evidence>
<evidence type="ECO:0000269" key="25">
    <source>
    </source>
</evidence>
<evidence type="ECO:0000269" key="26">
    <source>
    </source>
</evidence>
<evidence type="ECO:0000269" key="27">
    <source>
    </source>
</evidence>
<evidence type="ECO:0000269" key="28">
    <source>
    </source>
</evidence>
<evidence type="ECO:0000269" key="29">
    <source>
    </source>
</evidence>
<evidence type="ECO:0000269" key="30">
    <source>
    </source>
</evidence>
<evidence type="ECO:0000269" key="31">
    <source>
    </source>
</evidence>
<evidence type="ECO:0000269" key="32">
    <source>
    </source>
</evidence>
<evidence type="ECO:0000269" key="33">
    <source>
    </source>
</evidence>
<evidence type="ECO:0000269" key="34">
    <source>
    </source>
</evidence>
<evidence type="ECO:0000269" key="35">
    <source>
    </source>
</evidence>
<evidence type="ECO:0000269" key="36">
    <source>
    </source>
</evidence>
<evidence type="ECO:0000303" key="37">
    <source>
    </source>
</evidence>
<evidence type="ECO:0000305" key="38"/>
<evidence type="ECO:0000305" key="39">
    <source>
    </source>
</evidence>
<evidence type="ECO:0007744" key="40">
    <source>
    </source>
</evidence>
<evidence type="ECO:0007744" key="41">
    <source>
    </source>
</evidence>
<evidence type="ECO:0007744" key="42">
    <source>
    </source>
</evidence>
<evidence type="ECO:0007829" key="43">
    <source>
        <dbReference type="PDB" id="2CSW"/>
    </source>
</evidence>
<evidence type="ECO:0007829" key="44">
    <source>
        <dbReference type="PDB" id="2PIE"/>
    </source>
</evidence>
<evidence type="ECO:0007829" key="45">
    <source>
        <dbReference type="PDB" id="4AYC"/>
    </source>
</evidence>
<sequence length="485" mass="55518">MGEPGFFVTGDRAGGRSWCLRRVGMSAGWLLLEDGCEVTVGRGFGVTYQLVSKICPLMISRNHCVLKQNPEGQWTIMDNKSLNGVWLNRARLEPLRVYSIHQGDYIQLGVPLENKENAEYEYEVTEEDWETIYPCLSPKNDQMIEKNKELRTKRKFSLDELAGPGAEGPSNLKSKINKVSCESGQPVKSQGKGEVASTPSDNLDPKLTALEPSKTTGAPIYPGFPKVTEVHHEQKASNSSASQRSLQMFKVTMSRILRLKIQMQEKHEAVMNVKKQTQKGNSKKVVQMEQELQDLQSQLCAEQAQQQARVEQLEKTFQEEEQHLQGLEIAQGEKDLKQQLAQALQEHWALMEELNRSKKDFEAIIQAKNKELEQTKEEKEKMQAQKEEVLSHMNDVLENELQCIICSEYFIEAVTLNCAHSFCSYCINEWMKRKIECPICRKDIKSKTYSLVLDNCINKMVNNLSSEVKERRIVLIRERKAKRLF</sequence>
<feature type="chain" id="PRO_0000056048" description="E3 ubiquitin-protein ligase RNF8">
    <location>
        <begin position="1"/>
        <end position="485"/>
    </location>
</feature>
<feature type="domain" description="FHA" evidence="2">
    <location>
        <begin position="38"/>
        <end position="92"/>
    </location>
</feature>
<feature type="zinc finger region" description="RING-type" evidence="2">
    <location>
        <begin position="403"/>
        <end position="441"/>
    </location>
</feature>
<feature type="region of interest" description="Required for interaction with PIWIL1" evidence="2">
    <location>
        <begin position="68"/>
        <end position="72"/>
    </location>
</feature>
<feature type="region of interest" description="Disordered" evidence="3">
    <location>
        <begin position="181"/>
        <end position="220"/>
    </location>
</feature>
<feature type="modified residue" description="Phosphoserine" evidence="40 41 42">
    <location>
        <position position="157"/>
    </location>
</feature>
<feature type="splice variant" id="VSP_036671" description="In isoform 2." evidence="37">
    <original>SLNGVWLNRARLEPLRVY</original>
    <variation>SFPSEKAEDFTAAGERFL</variation>
    <location>
        <begin position="81"/>
        <end position="98"/>
    </location>
</feature>
<feature type="splice variant" id="VSP_037831" description="In isoform 2." evidence="37">
    <location>
        <begin position="99"/>
        <end position="485"/>
    </location>
</feature>
<feature type="splice variant" id="VSP_054037" description="In isoform 3." evidence="38">
    <original>AVTLNCAHSFCSYCINEWMKRKIECPICRKDIKSKT</original>
    <variation>QRDCSEDRALRAFERLPGSASLRWSGGFSLAVTPLL</variation>
    <location>
        <begin position="413"/>
        <end position="448"/>
    </location>
</feature>
<feature type="splice variant" id="VSP_054038" description="In isoform 3." evidence="38">
    <location>
        <begin position="449"/>
        <end position="485"/>
    </location>
</feature>
<feature type="sequence variant" id="VAR_052096" description="In dbSNP:rs34338974.">
    <original>A</original>
    <variation>T</variation>
    <location>
        <position position="162"/>
    </location>
</feature>
<feature type="sequence variant" id="VAR_052097" description="In dbSNP:rs1139944.">
    <original>I</original>
    <variation>V</variation>
    <location>
        <position position="473"/>
    </location>
</feature>
<feature type="mutagenesis site" description="Abolishes interaction with ATM-phosphorylated MDC1. Abolishes interaction with human herpesvirus 1 ICP0. Abolishes recruitment to DNA damage sites after UV irradiation, ionizing radiation, or treatment with an alkylating agent. Does not affect ubiquitination of NBN." evidence="8 23 27 33 34">
    <original>R</original>
    <variation>A</variation>
    <location>
        <position position="42"/>
    </location>
</feature>
<feature type="mutagenesis site" description="Marked reduction of E2-dependent ubiquitination of histone H2A. Loss of UBE2E2- and UBE2N-binding. Loss of nuclear localization." evidence="4 5 6 8">
    <original>C</original>
    <variation>S</variation>
    <location>
        <position position="403"/>
    </location>
</feature>
<feature type="mutagenesis site" description="Impairs interaction with UBE2L6/UBCH8 and ability to mediate 'Lys-48'-linked ubiquitination E3 ligase activity, while it still catalyzes 'Lys-63'-linked ubiquitination and still interacts with UBE2N/UBC13." evidence="24 26 29">
    <original>I</original>
    <variation>A</variation>
    <location>
        <position position="405"/>
    </location>
</feature>
<feature type="mutagenesis site" description="Abolishes ubiquitin-ligase activity." evidence="23">
    <original>C</original>
    <variation>S</variation>
    <location>
        <position position="406"/>
    </location>
</feature>
<feature type="mutagenesis site" description="Does not affect the monomeric structure but abolishes ability to monoubiquitinate H2A in nucleosomes." evidence="32">
    <original>D</original>
    <variation>R</variation>
    <location>
        <position position="443"/>
    </location>
</feature>
<feature type="sequence conflict" description="In Ref. 6; BAD96485." evidence="38" ref="6">
    <original>V</original>
    <variation>A</variation>
    <location>
        <position position="230"/>
    </location>
</feature>
<feature type="sequence conflict" description="In Ref. 6; BAD96485." evidence="38" ref="6">
    <original>K</original>
    <variation>R</variation>
    <location>
        <position position="334"/>
    </location>
</feature>
<feature type="strand" evidence="44">
    <location>
        <begin position="16"/>
        <end position="22"/>
    </location>
</feature>
<feature type="strand" evidence="44">
    <location>
        <begin position="29"/>
        <end position="32"/>
    </location>
</feature>
<feature type="strand" evidence="44">
    <location>
        <begin position="38"/>
        <end position="49"/>
    </location>
</feature>
<feature type="helix" evidence="43">
    <location>
        <begin position="56"/>
        <end position="58"/>
    </location>
</feature>
<feature type="strand" evidence="44">
    <location>
        <begin position="64"/>
        <end position="68"/>
    </location>
</feature>
<feature type="strand" evidence="44">
    <location>
        <begin position="74"/>
        <end position="78"/>
    </location>
</feature>
<feature type="strand" evidence="44">
    <location>
        <begin position="85"/>
        <end position="87"/>
    </location>
</feature>
<feature type="strand" evidence="44">
    <location>
        <begin position="105"/>
        <end position="109"/>
    </location>
</feature>
<feature type="strand" evidence="44">
    <location>
        <begin position="119"/>
        <end position="128"/>
    </location>
</feature>
<feature type="helix" evidence="44">
    <location>
        <begin position="129"/>
        <end position="132"/>
    </location>
</feature>
<feature type="helix" evidence="44">
    <location>
        <begin position="133"/>
        <end position="135"/>
    </location>
</feature>
<feature type="helix" evidence="45">
    <location>
        <begin position="351"/>
        <end position="400"/>
    </location>
</feature>
<feature type="turn" evidence="45">
    <location>
        <begin position="404"/>
        <end position="406"/>
    </location>
</feature>
<feature type="strand" evidence="45">
    <location>
        <begin position="411"/>
        <end position="416"/>
    </location>
</feature>
<feature type="strand" evidence="45">
    <location>
        <begin position="421"/>
        <end position="423"/>
    </location>
</feature>
<feature type="helix" evidence="45">
    <location>
        <begin position="424"/>
        <end position="430"/>
    </location>
</feature>
<feature type="turn" evidence="45">
    <location>
        <begin position="431"/>
        <end position="433"/>
    </location>
</feature>
<feature type="turn" evidence="45">
    <location>
        <begin position="438"/>
        <end position="440"/>
    </location>
</feature>
<feature type="strand" evidence="45">
    <location>
        <begin position="447"/>
        <end position="449"/>
    </location>
</feature>
<feature type="helix" evidence="45">
    <location>
        <begin position="451"/>
        <end position="461"/>
    </location>
</feature>
<feature type="helix" evidence="45">
    <location>
        <begin position="466"/>
        <end position="480"/>
    </location>
</feature>
<name>RNF8_HUMAN</name>
<dbReference type="EC" id="2.3.2.27" evidence="2 33"/>
<dbReference type="EMBL" id="AB012770">
    <property type="protein sequence ID" value="BAA33557.1"/>
    <property type="molecule type" value="Genomic_DNA"/>
</dbReference>
<dbReference type="EMBL" id="AF334675">
    <property type="protein sequence ID" value="AAQ14887.1"/>
    <property type="molecule type" value="mRNA"/>
</dbReference>
<dbReference type="EMBL" id="AB014546">
    <property type="protein sequence ID" value="BAA31621.2"/>
    <property type="status" value="ALT_INIT"/>
    <property type="molecule type" value="mRNA"/>
</dbReference>
<dbReference type="EMBL" id="AK298319">
    <property type="protein sequence ID" value="BAG60572.1"/>
    <property type="status" value="ALT_SEQ"/>
    <property type="molecule type" value="mRNA"/>
</dbReference>
<dbReference type="EMBL" id="BT007446">
    <property type="protein sequence ID" value="AAP36114.1"/>
    <property type="molecule type" value="mRNA"/>
</dbReference>
<dbReference type="EMBL" id="AK222765">
    <property type="protein sequence ID" value="BAD96485.1"/>
    <property type="molecule type" value="mRNA"/>
</dbReference>
<dbReference type="EMBL" id="AL096712">
    <property type="status" value="NOT_ANNOTATED_CDS"/>
    <property type="molecule type" value="Genomic_DNA"/>
</dbReference>
<dbReference type="EMBL" id="CH471081">
    <property type="protein sequence ID" value="EAX03944.1"/>
    <property type="molecule type" value="Genomic_DNA"/>
</dbReference>
<dbReference type="EMBL" id="CH471081">
    <property type="protein sequence ID" value="EAX03945.1"/>
    <property type="status" value="ALT_SEQ"/>
    <property type="molecule type" value="Genomic_DNA"/>
</dbReference>
<dbReference type="EMBL" id="BC007517">
    <property type="protein sequence ID" value="AAH07517.1"/>
    <property type="molecule type" value="mRNA"/>
</dbReference>
<dbReference type="CCDS" id="CCDS4833.1">
    <molecule id="O76064-3"/>
</dbReference>
<dbReference type="CCDS" id="CCDS4834.1">
    <molecule id="O76064-1"/>
</dbReference>
<dbReference type="RefSeq" id="NP_003949.1">
    <molecule id="O76064-1"/>
    <property type="nucleotide sequence ID" value="NM_003958.4"/>
</dbReference>
<dbReference type="RefSeq" id="NP_898901.1">
    <molecule id="O76064-3"/>
    <property type="nucleotide sequence ID" value="NM_183078.3"/>
</dbReference>
<dbReference type="PDB" id="2CSW">
    <property type="method" value="NMR"/>
    <property type="chains" value="A=8-139"/>
</dbReference>
<dbReference type="PDB" id="2PIE">
    <property type="method" value="X-ray"/>
    <property type="resolution" value="1.35 A"/>
    <property type="chains" value="A=13-146"/>
</dbReference>
<dbReference type="PDB" id="4AYC">
    <property type="method" value="X-ray"/>
    <property type="resolution" value="1.90 A"/>
    <property type="chains" value="A/B=351-485"/>
</dbReference>
<dbReference type="PDB" id="4ORH">
    <property type="method" value="X-ray"/>
    <property type="resolution" value="4.80 A"/>
    <property type="chains" value="C/G/H/K/L=345-485"/>
</dbReference>
<dbReference type="PDB" id="4WHV">
    <property type="method" value="X-ray"/>
    <property type="resolution" value="8.30 A"/>
    <property type="chains" value="C/D/I/J=345-485"/>
</dbReference>
<dbReference type="PDBsum" id="2CSW"/>
<dbReference type="PDBsum" id="2PIE"/>
<dbReference type="PDBsum" id="4AYC"/>
<dbReference type="PDBsum" id="4ORH"/>
<dbReference type="PDBsum" id="4WHV"/>
<dbReference type="BMRB" id="O76064"/>
<dbReference type="SASBDB" id="O76064"/>
<dbReference type="SMR" id="O76064"/>
<dbReference type="BioGRID" id="114492">
    <property type="interactions" value="424"/>
</dbReference>
<dbReference type="CORUM" id="O76064"/>
<dbReference type="DIP" id="DIP-31265N"/>
<dbReference type="FunCoup" id="O76064">
    <property type="interactions" value="2195"/>
</dbReference>
<dbReference type="IntAct" id="O76064">
    <property type="interactions" value="81"/>
</dbReference>
<dbReference type="MINT" id="O76064"/>
<dbReference type="STRING" id="9606.ENSP00000362578"/>
<dbReference type="iPTMnet" id="O76064"/>
<dbReference type="PhosphoSitePlus" id="O76064"/>
<dbReference type="BioMuta" id="RNF8"/>
<dbReference type="jPOST" id="O76064"/>
<dbReference type="MassIVE" id="O76064"/>
<dbReference type="PaxDb" id="9606-ENSP00000362578"/>
<dbReference type="PeptideAtlas" id="O76064"/>
<dbReference type="ProteomicsDB" id="50370">
    <molecule id="O76064-1"/>
</dbReference>
<dbReference type="ProteomicsDB" id="50371">
    <molecule id="O76064-2"/>
</dbReference>
<dbReference type="Pumba" id="O76064"/>
<dbReference type="Antibodypedia" id="15585">
    <property type="antibodies" value="334 antibodies from 37 providers"/>
</dbReference>
<dbReference type="DNASU" id="9025"/>
<dbReference type="Ensembl" id="ENST00000229866.10">
    <molecule id="O76064-2"/>
    <property type="protein sequence ID" value="ENSP00000229866.6"/>
    <property type="gene ID" value="ENSG00000112130.17"/>
</dbReference>
<dbReference type="Ensembl" id="ENST00000373479.9">
    <molecule id="O76064-1"/>
    <property type="protein sequence ID" value="ENSP00000362578.4"/>
    <property type="gene ID" value="ENSG00000112130.17"/>
</dbReference>
<dbReference type="Ensembl" id="ENST00000469731.5">
    <molecule id="O76064-3"/>
    <property type="protein sequence ID" value="ENSP00000418879.1"/>
    <property type="gene ID" value="ENSG00000112130.17"/>
</dbReference>
<dbReference type="GeneID" id="9025"/>
<dbReference type="KEGG" id="hsa:9025"/>
<dbReference type="MANE-Select" id="ENST00000373479.9">
    <property type="protein sequence ID" value="ENSP00000362578.4"/>
    <property type="RefSeq nucleotide sequence ID" value="NM_003958.4"/>
    <property type="RefSeq protein sequence ID" value="NP_003949.1"/>
</dbReference>
<dbReference type="UCSC" id="uc003onq.4">
    <molecule id="O76064-1"/>
    <property type="organism name" value="human"/>
</dbReference>
<dbReference type="AGR" id="HGNC:10071"/>
<dbReference type="CTD" id="9025"/>
<dbReference type="DisGeNET" id="9025"/>
<dbReference type="GeneCards" id="RNF8"/>
<dbReference type="HGNC" id="HGNC:10071">
    <property type="gene designation" value="RNF8"/>
</dbReference>
<dbReference type="HPA" id="ENSG00000112130">
    <property type="expression patterns" value="Low tissue specificity"/>
</dbReference>
<dbReference type="MIM" id="611685">
    <property type="type" value="gene"/>
</dbReference>
<dbReference type="neXtProt" id="NX_O76064"/>
<dbReference type="OpenTargets" id="ENSG00000112130"/>
<dbReference type="PharmGKB" id="PA34445"/>
<dbReference type="VEuPathDB" id="HostDB:ENSG00000112130"/>
<dbReference type="eggNOG" id="KOG3872">
    <property type="taxonomic scope" value="Eukaryota"/>
</dbReference>
<dbReference type="GeneTree" id="ENSGT00400000022349"/>
<dbReference type="HOGENOM" id="CLU_023453_1_0_1"/>
<dbReference type="InParanoid" id="O76064"/>
<dbReference type="OMA" id="TMISRCH"/>
<dbReference type="OrthoDB" id="5330228at2759"/>
<dbReference type="PAN-GO" id="O76064">
    <property type="GO annotations" value="10 GO annotations based on evolutionary models"/>
</dbReference>
<dbReference type="PhylomeDB" id="O76064"/>
<dbReference type="TreeFam" id="TF330957"/>
<dbReference type="BRENDA" id="2.3.2.27">
    <property type="organism ID" value="2681"/>
</dbReference>
<dbReference type="PathwayCommons" id="O76064"/>
<dbReference type="Reactome" id="R-HSA-5693565">
    <property type="pathway name" value="Recruitment and ATM-mediated phosphorylation of repair and signaling proteins at DNA double strand breaks"/>
</dbReference>
<dbReference type="Reactome" id="R-HSA-5693571">
    <property type="pathway name" value="Nonhomologous End-Joining (NHEJ)"/>
</dbReference>
<dbReference type="Reactome" id="R-HSA-5693607">
    <property type="pathway name" value="Processing of DNA double-strand break ends"/>
</dbReference>
<dbReference type="Reactome" id="R-HSA-69473">
    <property type="pathway name" value="G2/M DNA damage checkpoint"/>
</dbReference>
<dbReference type="SignaLink" id="O76064"/>
<dbReference type="SIGNOR" id="O76064"/>
<dbReference type="UniPathway" id="UPA00143"/>
<dbReference type="BioGRID-ORCS" id="9025">
    <property type="hits" value="400 hits in 1209 CRISPR screens"/>
</dbReference>
<dbReference type="CD-CODE" id="B5B9A610">
    <property type="entry name" value="PML body"/>
</dbReference>
<dbReference type="ChiTaRS" id="RNF8">
    <property type="organism name" value="human"/>
</dbReference>
<dbReference type="EvolutionaryTrace" id="O76064"/>
<dbReference type="GeneWiki" id="RNF8"/>
<dbReference type="GenomeRNAi" id="9025"/>
<dbReference type="Pharos" id="O76064">
    <property type="development level" value="Tbio"/>
</dbReference>
<dbReference type="PRO" id="PR:O76064"/>
<dbReference type="Proteomes" id="UP000005640">
    <property type="component" value="Chromosome 6"/>
</dbReference>
<dbReference type="RNAct" id="O76064">
    <property type="molecule type" value="protein"/>
</dbReference>
<dbReference type="Bgee" id="ENSG00000112130">
    <property type="expression patterns" value="Expressed in cortical plate and 196 other cell types or tissues"/>
</dbReference>
<dbReference type="ExpressionAtlas" id="O76064">
    <property type="expression patterns" value="baseline and differential"/>
</dbReference>
<dbReference type="GO" id="GO:0000781">
    <property type="term" value="C:chromosome, telomeric region"/>
    <property type="evidence" value="ECO:0000250"/>
    <property type="project" value="UniProtKB"/>
</dbReference>
<dbReference type="GO" id="GO:0005829">
    <property type="term" value="C:cytosol"/>
    <property type="evidence" value="ECO:0000314"/>
    <property type="project" value="HPA"/>
</dbReference>
<dbReference type="GO" id="GO:0030496">
    <property type="term" value="C:midbody"/>
    <property type="evidence" value="ECO:0007669"/>
    <property type="project" value="UniProtKB-SubCell"/>
</dbReference>
<dbReference type="GO" id="GO:0005654">
    <property type="term" value="C:nucleoplasm"/>
    <property type="evidence" value="ECO:0000314"/>
    <property type="project" value="HPA"/>
</dbReference>
<dbReference type="GO" id="GO:0005634">
    <property type="term" value="C:nucleus"/>
    <property type="evidence" value="ECO:0000314"/>
    <property type="project" value="UniProtKB"/>
</dbReference>
<dbReference type="GO" id="GO:0035861">
    <property type="term" value="C:site of double-strand break"/>
    <property type="evidence" value="ECO:0000314"/>
    <property type="project" value="UniProtKB"/>
</dbReference>
<dbReference type="GO" id="GO:0000151">
    <property type="term" value="C:ubiquitin ligase complex"/>
    <property type="evidence" value="ECO:0000314"/>
    <property type="project" value="UniProtKB"/>
</dbReference>
<dbReference type="GO" id="GO:0003682">
    <property type="term" value="F:chromatin binding"/>
    <property type="evidence" value="ECO:0000314"/>
    <property type="project" value="UniProtKB"/>
</dbReference>
<dbReference type="GO" id="GO:0042393">
    <property type="term" value="F:histone binding"/>
    <property type="evidence" value="ECO:0000314"/>
    <property type="project" value="UniProtKB"/>
</dbReference>
<dbReference type="GO" id="GO:0042802">
    <property type="term" value="F:identical protein binding"/>
    <property type="evidence" value="ECO:0000353"/>
    <property type="project" value="IntAct"/>
</dbReference>
<dbReference type="GO" id="GO:0042803">
    <property type="term" value="F:protein homodimerization activity"/>
    <property type="evidence" value="ECO:0000314"/>
    <property type="project" value="UniProtKB"/>
</dbReference>
<dbReference type="GO" id="GO:0043130">
    <property type="term" value="F:ubiquitin binding"/>
    <property type="evidence" value="ECO:0007669"/>
    <property type="project" value="UniProtKB-UniRule"/>
</dbReference>
<dbReference type="GO" id="GO:0061630">
    <property type="term" value="F:ubiquitin protein ligase activity"/>
    <property type="evidence" value="ECO:0000314"/>
    <property type="project" value="UniProtKB"/>
</dbReference>
<dbReference type="GO" id="GO:0031625">
    <property type="term" value="F:ubiquitin protein ligase binding"/>
    <property type="evidence" value="ECO:0000353"/>
    <property type="project" value="UniProtKB"/>
</dbReference>
<dbReference type="GO" id="GO:0008270">
    <property type="term" value="F:zinc ion binding"/>
    <property type="evidence" value="ECO:0000314"/>
    <property type="project" value="UniProtKB"/>
</dbReference>
<dbReference type="GO" id="GO:0051301">
    <property type="term" value="P:cell division"/>
    <property type="evidence" value="ECO:0007669"/>
    <property type="project" value="UniProtKB-KW"/>
</dbReference>
<dbReference type="GO" id="GO:0006974">
    <property type="term" value="P:DNA damage response"/>
    <property type="evidence" value="ECO:0000314"/>
    <property type="project" value="UniProtKB"/>
</dbReference>
<dbReference type="GO" id="GO:0140861">
    <property type="term" value="P:DNA repair-dependent chromatin remodeling"/>
    <property type="evidence" value="ECO:0000314"/>
    <property type="project" value="UniProtKB"/>
</dbReference>
<dbReference type="GO" id="GO:0006302">
    <property type="term" value="P:double-strand break repair"/>
    <property type="evidence" value="ECO:0000314"/>
    <property type="project" value="UniProtKB"/>
</dbReference>
<dbReference type="GO" id="GO:0006303">
    <property type="term" value="P:double-strand break repair via nonhomologous end joining"/>
    <property type="evidence" value="ECO:0000250"/>
    <property type="project" value="UniProtKB"/>
</dbReference>
<dbReference type="GO" id="GO:0040029">
    <property type="term" value="P:epigenetic regulation of gene expression"/>
    <property type="evidence" value="ECO:0000315"/>
    <property type="project" value="UniProtKB"/>
</dbReference>
<dbReference type="GO" id="GO:0036297">
    <property type="term" value="P:interstrand cross-link repair"/>
    <property type="evidence" value="ECO:0000304"/>
    <property type="project" value="UniProtKB"/>
</dbReference>
<dbReference type="GO" id="GO:0045190">
    <property type="term" value="P:isotype switching"/>
    <property type="evidence" value="ECO:0000250"/>
    <property type="project" value="UniProtKB"/>
</dbReference>
<dbReference type="GO" id="GO:0034244">
    <property type="term" value="P:negative regulation of transcription elongation by RNA polymerase II"/>
    <property type="evidence" value="ECO:0000315"/>
    <property type="project" value="UniProtKB"/>
</dbReference>
<dbReference type="GO" id="GO:0045739">
    <property type="term" value="P:positive regulation of DNA repair"/>
    <property type="evidence" value="ECO:0000314"/>
    <property type="project" value="UniProtKB"/>
</dbReference>
<dbReference type="GO" id="GO:1905168">
    <property type="term" value="P:positive regulation of double-strand break repair via homologous recombination"/>
    <property type="evidence" value="ECO:0000314"/>
    <property type="project" value="UniProtKB"/>
</dbReference>
<dbReference type="GO" id="GO:0051865">
    <property type="term" value="P:protein autoubiquitination"/>
    <property type="evidence" value="ECO:0000314"/>
    <property type="project" value="UniProtKB"/>
</dbReference>
<dbReference type="GO" id="GO:0070936">
    <property type="term" value="P:protein K48-linked ubiquitination"/>
    <property type="evidence" value="ECO:0000314"/>
    <property type="project" value="UniProtKB"/>
</dbReference>
<dbReference type="GO" id="GO:0085020">
    <property type="term" value="P:protein K6-linked ubiquitination"/>
    <property type="evidence" value="ECO:0000314"/>
    <property type="project" value="UniProtKB"/>
</dbReference>
<dbReference type="GO" id="GO:0070534">
    <property type="term" value="P:protein K63-linked ubiquitination"/>
    <property type="evidence" value="ECO:0000314"/>
    <property type="project" value="UniProtKB"/>
</dbReference>
<dbReference type="GO" id="GO:0010212">
    <property type="term" value="P:response to ionizing radiation"/>
    <property type="evidence" value="ECO:0000314"/>
    <property type="project" value="UniProtKB"/>
</dbReference>
<dbReference type="GO" id="GO:0042770">
    <property type="term" value="P:signal transduction in response to DNA damage"/>
    <property type="evidence" value="ECO:0007669"/>
    <property type="project" value="Ensembl"/>
</dbReference>
<dbReference type="GO" id="GO:0035092">
    <property type="term" value="P:sperm DNA condensation"/>
    <property type="evidence" value="ECO:0000250"/>
    <property type="project" value="UniProtKB"/>
</dbReference>
<dbReference type="GO" id="GO:0006511">
    <property type="term" value="P:ubiquitin-dependent protein catabolic process"/>
    <property type="evidence" value="ECO:0000314"/>
    <property type="project" value="UniProtKB"/>
</dbReference>
<dbReference type="CDD" id="cd22663">
    <property type="entry name" value="FHA_RNF8"/>
    <property type="match status" value="1"/>
</dbReference>
<dbReference type="CDD" id="cd16535">
    <property type="entry name" value="RING-HC_RNF8"/>
    <property type="match status" value="1"/>
</dbReference>
<dbReference type="FunFam" id="1.20.5.170:FF:000050">
    <property type="entry name" value="E3 ubiquitin-protein ligase RNF8"/>
    <property type="match status" value="1"/>
</dbReference>
<dbReference type="FunFam" id="2.60.200.20:FF:000015">
    <property type="entry name" value="E3 ubiquitin-protein ligase RNF8"/>
    <property type="match status" value="1"/>
</dbReference>
<dbReference type="FunFam" id="3.30.40.10:FF:000242">
    <property type="entry name" value="E3 ubiquitin-protein ligase RNF8"/>
    <property type="match status" value="1"/>
</dbReference>
<dbReference type="Gene3D" id="1.20.5.170">
    <property type="match status" value="1"/>
</dbReference>
<dbReference type="Gene3D" id="2.60.200.20">
    <property type="match status" value="1"/>
</dbReference>
<dbReference type="Gene3D" id="3.30.40.10">
    <property type="entry name" value="Zinc/RING finger domain, C3HC4 (zinc finger)"/>
    <property type="match status" value="1"/>
</dbReference>
<dbReference type="HAMAP" id="MF_03067">
    <property type="entry name" value="RNF8"/>
    <property type="match status" value="1"/>
</dbReference>
<dbReference type="IDEAL" id="IID00118"/>
<dbReference type="InterPro" id="IPR000253">
    <property type="entry name" value="FHA_dom"/>
</dbReference>
<dbReference type="InterPro" id="IPR017335">
    <property type="entry name" value="RNF8"/>
</dbReference>
<dbReference type="InterPro" id="IPR008984">
    <property type="entry name" value="SMAD_FHA_dom_sf"/>
</dbReference>
<dbReference type="InterPro" id="IPR001841">
    <property type="entry name" value="Znf_RING"/>
</dbReference>
<dbReference type="InterPro" id="IPR013083">
    <property type="entry name" value="Znf_RING/FYVE/PHD"/>
</dbReference>
<dbReference type="InterPro" id="IPR017907">
    <property type="entry name" value="Znf_RING_CS"/>
</dbReference>
<dbReference type="PANTHER" id="PTHR15067">
    <property type="entry name" value="E3 UBIQUITIN-PROTEIN LIGASE RNF8"/>
    <property type="match status" value="1"/>
</dbReference>
<dbReference type="PANTHER" id="PTHR15067:SF4">
    <property type="entry name" value="E3 UBIQUITIN-PROTEIN LIGASE RNF8"/>
    <property type="match status" value="1"/>
</dbReference>
<dbReference type="Pfam" id="PF00498">
    <property type="entry name" value="FHA"/>
    <property type="match status" value="1"/>
</dbReference>
<dbReference type="Pfam" id="PF13920">
    <property type="entry name" value="zf-C3HC4_3"/>
    <property type="match status" value="1"/>
</dbReference>
<dbReference type="PIRSF" id="PIRSF037950">
    <property type="entry name" value="E3_ubiquit_lig_RNF8"/>
    <property type="match status" value="1"/>
</dbReference>
<dbReference type="SMART" id="SM00240">
    <property type="entry name" value="FHA"/>
    <property type="match status" value="1"/>
</dbReference>
<dbReference type="SMART" id="SM00184">
    <property type="entry name" value="RING"/>
    <property type="match status" value="1"/>
</dbReference>
<dbReference type="SUPFAM" id="SSF57850">
    <property type="entry name" value="RING/U-box"/>
    <property type="match status" value="1"/>
</dbReference>
<dbReference type="SUPFAM" id="SSF49879">
    <property type="entry name" value="SMAD/FHA domain"/>
    <property type="match status" value="1"/>
</dbReference>
<dbReference type="PROSITE" id="PS50006">
    <property type="entry name" value="FHA_DOMAIN"/>
    <property type="match status" value="1"/>
</dbReference>
<dbReference type="PROSITE" id="PS00518">
    <property type="entry name" value="ZF_RING_1"/>
    <property type="match status" value="1"/>
</dbReference>
<dbReference type="PROSITE" id="PS50089">
    <property type="entry name" value="ZF_RING_2"/>
    <property type="match status" value="1"/>
</dbReference>
<gene>
    <name evidence="2" type="primary">RNF8</name>
    <name type="synonym">KIAA0646</name>
</gene>
<keyword id="KW-0002">3D-structure</keyword>
<keyword id="KW-0025">Alternative splicing</keyword>
<keyword id="KW-0131">Cell cycle</keyword>
<keyword id="KW-0132">Cell division</keyword>
<keyword id="KW-0156">Chromatin regulator</keyword>
<keyword id="KW-0158">Chromosome</keyword>
<keyword id="KW-0963">Cytoplasm</keyword>
<keyword id="KW-0903">Direct protein sequencing</keyword>
<keyword id="KW-0227">DNA damage</keyword>
<keyword id="KW-0234">DNA repair</keyword>
<keyword id="KW-0945">Host-virus interaction</keyword>
<keyword id="KW-0479">Metal-binding</keyword>
<keyword id="KW-0498">Mitosis</keyword>
<keyword id="KW-0539">Nucleus</keyword>
<keyword id="KW-0597">Phosphoprotein</keyword>
<keyword id="KW-1267">Proteomics identification</keyword>
<keyword id="KW-1185">Reference proteome</keyword>
<keyword id="KW-0779">Telomere</keyword>
<keyword id="KW-0808">Transferase</keyword>
<keyword id="KW-0832">Ubl conjugation</keyword>
<keyword id="KW-0833">Ubl conjugation pathway</keyword>
<keyword id="KW-0862">Zinc</keyword>
<keyword id="KW-0863">Zinc-finger</keyword>